<keyword id="KW-0002">3D-structure</keyword>
<keyword id="KW-0067">ATP-binding</keyword>
<keyword id="KW-1003">Cell membrane</keyword>
<keyword id="KW-0160">Chromosomal rearrangement</keyword>
<keyword id="KW-0225">Disease variant</keyword>
<keyword id="KW-1015">Disulfide bond</keyword>
<keyword id="KW-0325">Glycoprotein</keyword>
<keyword id="KW-0418">Kinase</keyword>
<keyword id="KW-0472">Membrane</keyword>
<keyword id="KW-0547">Nucleotide-binding</keyword>
<keyword id="KW-0597">Phosphoprotein</keyword>
<keyword id="KW-1267">Proteomics identification</keyword>
<keyword id="KW-0656">Proto-oncogene</keyword>
<keyword id="KW-0675">Receptor</keyword>
<keyword id="KW-1185">Reference proteome</keyword>
<keyword id="KW-0677">Repeat</keyword>
<keyword id="KW-0732">Signal</keyword>
<keyword id="KW-0808">Transferase</keyword>
<keyword id="KW-0812">Transmembrane</keyword>
<keyword id="KW-1133">Transmembrane helix</keyword>
<keyword id="KW-0829">Tyrosine-protein kinase</keyword>
<dbReference type="EC" id="2.7.10.1" evidence="33 36"/>
<dbReference type="EMBL" id="U62540">
    <property type="protein sequence ID" value="AAB71619.1"/>
    <property type="molecule type" value="mRNA"/>
</dbReference>
<dbReference type="EMBL" id="U66559">
    <property type="protein sequence ID" value="AAC51104.1"/>
    <property type="molecule type" value="mRNA"/>
</dbReference>
<dbReference type="EMBL" id="AB209477">
    <property type="protein sequence ID" value="BAD92714.1"/>
    <property type="status" value="ALT_INIT"/>
    <property type="molecule type" value="mRNA"/>
</dbReference>
<dbReference type="EMBL" id="AC106870">
    <property type="protein sequence ID" value="AAX93126.1"/>
    <property type="molecule type" value="Genomic_DNA"/>
</dbReference>
<dbReference type="EMBL" id="AC093756">
    <property type="protein sequence ID" value="AAX88892.1"/>
    <property type="molecule type" value="Genomic_DNA"/>
</dbReference>
<dbReference type="EMBL" id="AC074096">
    <property type="protein sequence ID" value="AAY15027.1"/>
    <property type="molecule type" value="Genomic_DNA"/>
</dbReference>
<dbReference type="EMBL" id="AB274722">
    <property type="protein sequence ID" value="BAF73611.1"/>
    <property type="molecule type" value="mRNA"/>
</dbReference>
<dbReference type="EMBL" id="AB275889">
    <property type="protein sequence ID" value="BAF73612.1"/>
    <property type="molecule type" value="mRNA"/>
</dbReference>
<dbReference type="CCDS" id="CCDS33172.1"/>
<dbReference type="RefSeq" id="NP_004295.2">
    <property type="nucleotide sequence ID" value="NM_004304.4"/>
</dbReference>
<dbReference type="PDB" id="2KUP">
    <property type="method" value="NMR"/>
    <property type="chains" value="B=1571-1589"/>
</dbReference>
<dbReference type="PDB" id="2KUQ">
    <property type="method" value="NMR"/>
    <property type="chains" value="A=1571-1589"/>
</dbReference>
<dbReference type="PDB" id="2XB7">
    <property type="method" value="X-ray"/>
    <property type="resolution" value="2.50 A"/>
    <property type="chains" value="A=1094-1407"/>
</dbReference>
<dbReference type="PDB" id="2XBA">
    <property type="method" value="X-ray"/>
    <property type="resolution" value="1.95 A"/>
    <property type="chains" value="A=1094-1407"/>
</dbReference>
<dbReference type="PDB" id="2XP2">
    <property type="method" value="X-ray"/>
    <property type="resolution" value="1.90 A"/>
    <property type="chains" value="A=1093-1411"/>
</dbReference>
<dbReference type="PDB" id="2YFX">
    <property type="method" value="X-ray"/>
    <property type="resolution" value="1.70 A"/>
    <property type="chains" value="A=1093-1411"/>
</dbReference>
<dbReference type="PDB" id="2YHV">
    <property type="method" value="X-ray"/>
    <property type="resolution" value="1.90 A"/>
    <property type="chains" value="A=1093-1411"/>
</dbReference>
<dbReference type="PDB" id="2YJR">
    <property type="method" value="X-ray"/>
    <property type="resolution" value="1.90 A"/>
    <property type="chains" value="A=1093-1411"/>
</dbReference>
<dbReference type="PDB" id="2YJS">
    <property type="method" value="X-ray"/>
    <property type="resolution" value="1.90 A"/>
    <property type="chains" value="A=1093-1411"/>
</dbReference>
<dbReference type="PDB" id="2YS5">
    <property type="method" value="NMR"/>
    <property type="chains" value="B=1571-1589"/>
</dbReference>
<dbReference type="PDB" id="2YT2">
    <property type="method" value="NMR"/>
    <property type="chains" value="A=1571-1589"/>
</dbReference>
<dbReference type="PDB" id="3AOX">
    <property type="method" value="X-ray"/>
    <property type="resolution" value="1.75 A"/>
    <property type="chains" value="A=1069-1411"/>
</dbReference>
<dbReference type="PDB" id="3L9P">
    <property type="method" value="X-ray"/>
    <property type="resolution" value="1.80 A"/>
    <property type="chains" value="A=1072-1410"/>
</dbReference>
<dbReference type="PDB" id="3LCS">
    <property type="method" value="X-ray"/>
    <property type="resolution" value="1.95 A"/>
    <property type="chains" value="A=1072-1410"/>
</dbReference>
<dbReference type="PDB" id="3LCT">
    <property type="method" value="X-ray"/>
    <property type="resolution" value="2.10 A"/>
    <property type="chains" value="A=1072-1410"/>
</dbReference>
<dbReference type="PDB" id="4ANL">
    <property type="method" value="X-ray"/>
    <property type="resolution" value="1.70 A"/>
    <property type="chains" value="A=1093-1411"/>
</dbReference>
<dbReference type="PDB" id="4ANQ">
    <property type="method" value="X-ray"/>
    <property type="resolution" value="1.76 A"/>
    <property type="chains" value="A=1093-1411"/>
</dbReference>
<dbReference type="PDB" id="4ANS">
    <property type="method" value="X-ray"/>
    <property type="resolution" value="1.85 A"/>
    <property type="chains" value="A=1093-1411"/>
</dbReference>
<dbReference type="PDB" id="4CCB">
    <property type="method" value="X-ray"/>
    <property type="resolution" value="2.03 A"/>
    <property type="chains" value="A=1093-1411"/>
</dbReference>
<dbReference type="PDB" id="4CCU">
    <property type="method" value="X-ray"/>
    <property type="resolution" value="2.00 A"/>
    <property type="chains" value="A=1093-1411"/>
</dbReference>
<dbReference type="PDB" id="4CD0">
    <property type="method" value="X-ray"/>
    <property type="resolution" value="2.23 A"/>
    <property type="chains" value="A=1093-1411"/>
</dbReference>
<dbReference type="PDB" id="4CLI">
    <property type="method" value="X-ray"/>
    <property type="resolution" value="2.05 A"/>
    <property type="chains" value="A=1093-1411"/>
</dbReference>
<dbReference type="PDB" id="4CLJ">
    <property type="method" value="X-ray"/>
    <property type="resolution" value="1.66 A"/>
    <property type="chains" value="A=1093-1411"/>
</dbReference>
<dbReference type="PDB" id="4CMO">
    <property type="method" value="X-ray"/>
    <property type="resolution" value="2.05 A"/>
    <property type="chains" value="A=1093-1411"/>
</dbReference>
<dbReference type="PDB" id="4CMT">
    <property type="method" value="X-ray"/>
    <property type="resolution" value="1.73 A"/>
    <property type="chains" value="A=1093-1411"/>
</dbReference>
<dbReference type="PDB" id="4CMU">
    <property type="method" value="X-ray"/>
    <property type="resolution" value="1.80 A"/>
    <property type="chains" value="A=1093-1411"/>
</dbReference>
<dbReference type="PDB" id="4CNH">
    <property type="method" value="X-ray"/>
    <property type="resolution" value="1.90 A"/>
    <property type="chains" value="A/B=1093-1411"/>
</dbReference>
<dbReference type="PDB" id="4CTB">
    <property type="method" value="X-ray"/>
    <property type="resolution" value="1.79 A"/>
    <property type="chains" value="A=1093-1411"/>
</dbReference>
<dbReference type="PDB" id="4CTC">
    <property type="method" value="X-ray"/>
    <property type="resolution" value="2.03 A"/>
    <property type="chains" value="A=1093-1411"/>
</dbReference>
<dbReference type="PDB" id="4DCE">
    <property type="method" value="X-ray"/>
    <property type="resolution" value="2.03 A"/>
    <property type="chains" value="A/B=1078-1410"/>
</dbReference>
<dbReference type="PDB" id="4FNW">
    <property type="method" value="X-ray"/>
    <property type="resolution" value="1.75 A"/>
    <property type="chains" value="A=1084-1410"/>
</dbReference>
<dbReference type="PDB" id="4FNX">
    <property type="method" value="X-ray"/>
    <property type="resolution" value="1.70 A"/>
    <property type="chains" value="A=1084-1410"/>
</dbReference>
<dbReference type="PDB" id="4FNY">
    <property type="method" value="X-ray"/>
    <property type="resolution" value="2.45 A"/>
    <property type="chains" value="A=1084-1410"/>
</dbReference>
<dbReference type="PDB" id="4FNZ">
    <property type="method" value="X-ray"/>
    <property type="resolution" value="2.60 A"/>
    <property type="chains" value="A=1084-1410"/>
</dbReference>
<dbReference type="PDB" id="4FOB">
    <property type="method" value="X-ray"/>
    <property type="resolution" value="1.90 A"/>
    <property type="chains" value="A=1058-1410"/>
</dbReference>
<dbReference type="PDB" id="4FOC">
    <property type="method" value="X-ray"/>
    <property type="resolution" value="1.70 A"/>
    <property type="chains" value="A=1058-1410"/>
</dbReference>
<dbReference type="PDB" id="4FOD">
    <property type="method" value="X-ray"/>
    <property type="resolution" value="2.00 A"/>
    <property type="chains" value="A=1078-1410"/>
</dbReference>
<dbReference type="PDB" id="4JOA">
    <property type="method" value="X-ray"/>
    <property type="resolution" value="2.70 A"/>
    <property type="chains" value="A=1072-1410"/>
</dbReference>
<dbReference type="PDB" id="4MKC">
    <property type="method" value="X-ray"/>
    <property type="resolution" value="2.01 A"/>
    <property type="chains" value="A=1072-1410"/>
</dbReference>
<dbReference type="PDB" id="4TT7">
    <property type="method" value="X-ray"/>
    <property type="resolution" value="2.10 A"/>
    <property type="chains" value="A=1095-1410"/>
</dbReference>
<dbReference type="PDB" id="4Z55">
    <property type="method" value="X-ray"/>
    <property type="resolution" value="1.55 A"/>
    <property type="chains" value="A=1072-1410"/>
</dbReference>
<dbReference type="PDB" id="5A9U">
    <property type="method" value="X-ray"/>
    <property type="resolution" value="1.60 A"/>
    <property type="chains" value="A=1093-1411"/>
</dbReference>
<dbReference type="PDB" id="5AA8">
    <property type="method" value="X-ray"/>
    <property type="resolution" value="1.86 A"/>
    <property type="chains" value="A=1093-1411"/>
</dbReference>
<dbReference type="PDB" id="5AA9">
    <property type="method" value="X-ray"/>
    <property type="resolution" value="1.93 A"/>
    <property type="chains" value="A=1093-1411"/>
</dbReference>
<dbReference type="PDB" id="5AAA">
    <property type="method" value="X-ray"/>
    <property type="resolution" value="1.73 A"/>
    <property type="chains" value="A=1093-1411"/>
</dbReference>
<dbReference type="PDB" id="5AAB">
    <property type="method" value="X-ray"/>
    <property type="resolution" value="2.20 A"/>
    <property type="chains" value="A=1093-1411"/>
</dbReference>
<dbReference type="PDB" id="5AAC">
    <property type="method" value="X-ray"/>
    <property type="resolution" value="1.70 A"/>
    <property type="chains" value="A=1093-1411"/>
</dbReference>
<dbReference type="PDB" id="5FTO">
    <property type="method" value="X-ray"/>
    <property type="resolution" value="2.22 A"/>
    <property type="chains" value="A=1094-1407"/>
</dbReference>
<dbReference type="PDB" id="5FTQ">
    <property type="method" value="X-ray"/>
    <property type="resolution" value="1.70 A"/>
    <property type="chains" value="A=1094-1407"/>
</dbReference>
<dbReference type="PDB" id="5IMX">
    <property type="method" value="X-ray"/>
    <property type="resolution" value="2.12 A"/>
    <property type="chains" value="A=1093-1411"/>
</dbReference>
<dbReference type="PDB" id="5IUG">
    <property type="method" value="X-ray"/>
    <property type="resolution" value="1.93 A"/>
    <property type="chains" value="A=1084-1410"/>
</dbReference>
<dbReference type="PDB" id="5IUH">
    <property type="method" value="X-ray"/>
    <property type="resolution" value="2.10 A"/>
    <property type="chains" value="A=1084-1410"/>
</dbReference>
<dbReference type="PDB" id="5IUI">
    <property type="method" value="X-ray"/>
    <property type="resolution" value="1.88 A"/>
    <property type="chains" value="A=1084-1410"/>
</dbReference>
<dbReference type="PDB" id="5KZ0">
    <property type="method" value="X-ray"/>
    <property type="resolution" value="2.30 A"/>
    <property type="chains" value="A=1093-1411"/>
</dbReference>
<dbReference type="PDB" id="5VZ5">
    <property type="method" value="X-ray"/>
    <property type="resolution" value="2.59 A"/>
    <property type="chains" value="C=1274-1283"/>
</dbReference>
<dbReference type="PDB" id="6AT9">
    <property type="method" value="X-ray"/>
    <property type="resolution" value="2.95 A"/>
    <property type="chains" value="C=1274-1283"/>
</dbReference>
<dbReference type="PDB" id="6CDT">
    <property type="method" value="X-ray"/>
    <property type="resolution" value="1.80 A"/>
    <property type="chains" value="A=1093-1411"/>
</dbReference>
<dbReference type="PDB" id="6E0R">
    <property type="method" value="X-ray"/>
    <property type="resolution" value="2.30 A"/>
    <property type="chains" value="A=1090-1406"/>
</dbReference>
<dbReference type="PDB" id="6EBW">
    <property type="method" value="X-ray"/>
    <property type="resolution" value="2.46 A"/>
    <property type="chains" value="A=1090-1406"/>
</dbReference>
<dbReference type="PDB" id="6EDL">
    <property type="method" value="X-ray"/>
    <property type="resolution" value="2.80 A"/>
    <property type="chains" value="A=1090-1406"/>
</dbReference>
<dbReference type="PDB" id="6MX8">
    <property type="method" value="X-ray"/>
    <property type="resolution" value="1.96 A"/>
    <property type="chains" value="A=1094-1400"/>
</dbReference>
<dbReference type="PDB" id="7BTT">
    <property type="method" value="X-ray"/>
    <property type="resolution" value="1.86 A"/>
    <property type="chains" value="A=1093-1410"/>
</dbReference>
<dbReference type="PDB" id="7JY4">
    <property type="method" value="X-ray"/>
    <property type="resolution" value="2.42 A"/>
    <property type="chains" value="A=1090-1406"/>
</dbReference>
<dbReference type="PDB" id="7JYR">
    <property type="method" value="X-ray"/>
    <property type="resolution" value="2.32 A"/>
    <property type="chains" value="A=1090-1406"/>
</dbReference>
<dbReference type="PDB" id="7JYS">
    <property type="method" value="X-ray"/>
    <property type="resolution" value="2.22 A"/>
    <property type="chains" value="A=1090-1406"/>
</dbReference>
<dbReference type="PDB" id="7JYT">
    <property type="method" value="X-ray"/>
    <property type="resolution" value="2.00 A"/>
    <property type="chains" value="A=1090-1406"/>
</dbReference>
<dbReference type="PDB" id="7LRZ">
    <property type="method" value="X-ray"/>
    <property type="resolution" value="1.91 A"/>
    <property type="chains" value="A=678-986"/>
</dbReference>
<dbReference type="PDB" id="7LS0">
    <property type="method" value="X-ray"/>
    <property type="resolution" value="3.05 A"/>
    <property type="chains" value="A/B/C/D=678-1030"/>
</dbReference>
<dbReference type="PDB" id="7MZW">
    <property type="method" value="NMR"/>
    <property type="chains" value="A=673-1025"/>
</dbReference>
<dbReference type="PDB" id="7MZY">
    <property type="method" value="X-ray"/>
    <property type="resolution" value="1.50 A"/>
    <property type="chains" value="A/B=673-986"/>
</dbReference>
<dbReference type="PDB" id="7N00">
    <property type="method" value="EM"/>
    <property type="resolution" value="2.27 A"/>
    <property type="chains" value="A/C=648-1025"/>
</dbReference>
<dbReference type="PDB" id="7NWZ">
    <property type="method" value="X-ray"/>
    <property type="resolution" value="4.17 A"/>
    <property type="chains" value="A/B/E/F=648-985"/>
</dbReference>
<dbReference type="PDB" id="7NX3">
    <property type="method" value="X-ray"/>
    <property type="resolution" value="2.81 A"/>
    <property type="chains" value="A/F=648-1030"/>
</dbReference>
<dbReference type="PDB" id="7NX4">
    <property type="method" value="X-ray"/>
    <property type="resolution" value="3.00 A"/>
    <property type="chains" value="A=648-1030"/>
</dbReference>
<dbReference type="PDB" id="7R7K">
    <property type="method" value="X-ray"/>
    <property type="resolution" value="1.83 A"/>
    <property type="chains" value="A=1093-1411"/>
</dbReference>
<dbReference type="PDB" id="7R7R">
    <property type="method" value="X-ray"/>
    <property type="resolution" value="1.94 A"/>
    <property type="chains" value="A=1093-1411"/>
</dbReference>
<dbReference type="PDB" id="8ARJ">
    <property type="method" value="X-ray"/>
    <property type="resolution" value="1.65 A"/>
    <property type="chains" value="A=1093-1411"/>
</dbReference>
<dbReference type="PDB" id="9G5I">
    <property type="method" value="EM"/>
    <property type="resolution" value="3.20 A"/>
    <property type="chains" value="A/B=648-1025"/>
</dbReference>
<dbReference type="PDB" id="9GBE">
    <property type="method" value="X-ray"/>
    <property type="resolution" value="1.58 A"/>
    <property type="chains" value="A=1069-1411"/>
</dbReference>
<dbReference type="PDBsum" id="2KUP"/>
<dbReference type="PDBsum" id="2KUQ"/>
<dbReference type="PDBsum" id="2XB7"/>
<dbReference type="PDBsum" id="2XBA"/>
<dbReference type="PDBsum" id="2XP2"/>
<dbReference type="PDBsum" id="2YFX"/>
<dbReference type="PDBsum" id="2YHV"/>
<dbReference type="PDBsum" id="2YJR"/>
<dbReference type="PDBsum" id="2YJS"/>
<dbReference type="PDBsum" id="2YS5"/>
<dbReference type="PDBsum" id="2YT2"/>
<dbReference type="PDBsum" id="3AOX"/>
<dbReference type="PDBsum" id="3L9P"/>
<dbReference type="PDBsum" id="3LCS"/>
<dbReference type="PDBsum" id="3LCT"/>
<dbReference type="PDBsum" id="4ANL"/>
<dbReference type="PDBsum" id="4ANQ"/>
<dbReference type="PDBsum" id="4ANS"/>
<dbReference type="PDBsum" id="4CCB"/>
<dbReference type="PDBsum" id="4CCU"/>
<dbReference type="PDBsum" id="4CD0"/>
<dbReference type="PDBsum" id="4CLI"/>
<dbReference type="PDBsum" id="4CLJ"/>
<dbReference type="PDBsum" id="4CMO"/>
<dbReference type="PDBsum" id="4CMT"/>
<dbReference type="PDBsum" id="4CMU"/>
<dbReference type="PDBsum" id="4CNH"/>
<dbReference type="PDBsum" id="4CTB"/>
<dbReference type="PDBsum" id="4CTC"/>
<dbReference type="PDBsum" id="4DCE"/>
<dbReference type="PDBsum" id="4FNW"/>
<dbReference type="PDBsum" id="4FNX"/>
<dbReference type="PDBsum" id="4FNY"/>
<dbReference type="PDBsum" id="4FNZ"/>
<dbReference type="PDBsum" id="4FOB"/>
<dbReference type="PDBsum" id="4FOC"/>
<dbReference type="PDBsum" id="4FOD"/>
<dbReference type="PDBsum" id="4JOA"/>
<dbReference type="PDBsum" id="4MKC"/>
<dbReference type="PDBsum" id="4TT7"/>
<dbReference type="PDBsum" id="4Z55"/>
<dbReference type="PDBsum" id="5A9U"/>
<dbReference type="PDBsum" id="5AA8"/>
<dbReference type="PDBsum" id="5AA9"/>
<dbReference type="PDBsum" id="5AAA"/>
<dbReference type="PDBsum" id="5AAB"/>
<dbReference type="PDBsum" id="5AAC"/>
<dbReference type="PDBsum" id="5FTO"/>
<dbReference type="PDBsum" id="5FTQ"/>
<dbReference type="PDBsum" id="5IMX"/>
<dbReference type="PDBsum" id="5IUG"/>
<dbReference type="PDBsum" id="5IUH"/>
<dbReference type="PDBsum" id="5IUI"/>
<dbReference type="PDBsum" id="5KZ0"/>
<dbReference type="PDBsum" id="5VZ5"/>
<dbReference type="PDBsum" id="6AT9"/>
<dbReference type="PDBsum" id="6CDT"/>
<dbReference type="PDBsum" id="6E0R"/>
<dbReference type="PDBsum" id="6EBW"/>
<dbReference type="PDBsum" id="6EDL"/>
<dbReference type="PDBsum" id="6MX8"/>
<dbReference type="PDBsum" id="7BTT"/>
<dbReference type="PDBsum" id="7JY4"/>
<dbReference type="PDBsum" id="7JYR"/>
<dbReference type="PDBsum" id="7JYS"/>
<dbReference type="PDBsum" id="7JYT"/>
<dbReference type="PDBsum" id="7LRZ"/>
<dbReference type="PDBsum" id="7LS0"/>
<dbReference type="PDBsum" id="7MZW"/>
<dbReference type="PDBsum" id="7MZY"/>
<dbReference type="PDBsum" id="7N00"/>
<dbReference type="PDBsum" id="7NWZ"/>
<dbReference type="PDBsum" id="7NX3"/>
<dbReference type="PDBsum" id="7NX4"/>
<dbReference type="PDBsum" id="7R7K"/>
<dbReference type="PDBsum" id="7R7R"/>
<dbReference type="PDBsum" id="8ARJ"/>
<dbReference type="PDBsum" id="9G5I"/>
<dbReference type="PDBsum" id="9GBE"/>
<dbReference type="BMRB" id="Q9UM73"/>
<dbReference type="EMDB" id="EMD-24095"/>
<dbReference type="EMDB" id="EMD-51087"/>
<dbReference type="SMR" id="Q9UM73"/>
<dbReference type="BioGRID" id="106739">
    <property type="interactions" value="597"/>
</dbReference>
<dbReference type="CORUM" id="Q9UM73"/>
<dbReference type="DIP" id="DIP-5954N"/>
<dbReference type="FunCoup" id="Q9UM73">
    <property type="interactions" value="254"/>
</dbReference>
<dbReference type="IntAct" id="Q9UM73">
    <property type="interactions" value="161"/>
</dbReference>
<dbReference type="MINT" id="Q9UM73"/>
<dbReference type="STRING" id="9606.ENSP00000373700"/>
<dbReference type="BindingDB" id="Q9UM73"/>
<dbReference type="ChEMBL" id="CHEMBL4247"/>
<dbReference type="DrugBank" id="DB11363">
    <property type="generic name" value="Alectinib"/>
</dbReference>
<dbReference type="DrugBank" id="DB12729">
    <property type="generic name" value="ASP-3026"/>
</dbReference>
<dbReference type="DrugBank" id="DB00171">
    <property type="generic name" value="ATP"/>
</dbReference>
<dbReference type="DrugBank" id="DB12267">
    <property type="generic name" value="Brigatinib"/>
</dbReference>
<dbReference type="DrugBank" id="DB09063">
    <property type="generic name" value="Ceritinib"/>
</dbReference>
<dbReference type="DrugBank" id="DB08865">
    <property type="generic name" value="Crizotinib"/>
</dbReference>
<dbReference type="DrugBank" id="DB14860">
    <property type="generic name" value="Ensartinib"/>
</dbReference>
<dbReference type="DrugBank" id="DB11986">
    <property type="generic name" value="Entrectinib"/>
</dbReference>
<dbReference type="DrugBank" id="DB12010">
    <property type="generic name" value="Fostamatinib"/>
</dbReference>
<dbReference type="DrugBank" id="DB12141">
    <property type="generic name" value="Gilteritinib"/>
</dbReference>
<dbReference type="DrugBank" id="DB12130">
    <property type="generic name" value="Lorlatinib"/>
</dbReference>
<dbReference type="DrugBank" id="DB13104">
    <property type="generic name" value="X-396"/>
</dbReference>
<dbReference type="DrugCentral" id="Q9UM73"/>
<dbReference type="GuidetoPHARMACOLOGY" id="1839"/>
<dbReference type="GlyCosmos" id="Q9UM73">
    <property type="glycosylation" value="16 sites, No reported glycans"/>
</dbReference>
<dbReference type="GlyGen" id="Q9UM73">
    <property type="glycosylation" value="20 sites, 1 O-linked glycan (1 site)"/>
</dbReference>
<dbReference type="iPTMnet" id="Q9UM73"/>
<dbReference type="PhosphoSitePlus" id="Q9UM73"/>
<dbReference type="BioMuta" id="ALK"/>
<dbReference type="DMDM" id="296439447"/>
<dbReference type="jPOST" id="Q9UM73"/>
<dbReference type="MassIVE" id="Q9UM73"/>
<dbReference type="PaxDb" id="9606-ENSP00000373700"/>
<dbReference type="PeptideAtlas" id="Q9UM73"/>
<dbReference type="ProteomicsDB" id="85185"/>
<dbReference type="Antibodypedia" id="2099">
    <property type="antibodies" value="1481 antibodies from 40 providers"/>
</dbReference>
<dbReference type="DNASU" id="238"/>
<dbReference type="Ensembl" id="ENST00000389048.8">
    <property type="protein sequence ID" value="ENSP00000373700.3"/>
    <property type="gene ID" value="ENSG00000171094.18"/>
</dbReference>
<dbReference type="GeneID" id="238"/>
<dbReference type="KEGG" id="hsa:238"/>
<dbReference type="MANE-Select" id="ENST00000389048.8">
    <property type="protein sequence ID" value="ENSP00000373700.3"/>
    <property type="RefSeq nucleotide sequence ID" value="NM_004304.5"/>
    <property type="RefSeq protein sequence ID" value="NP_004295.2"/>
</dbReference>
<dbReference type="UCSC" id="uc002rmy.4">
    <property type="organism name" value="human"/>
</dbReference>
<dbReference type="AGR" id="HGNC:427"/>
<dbReference type="CTD" id="238"/>
<dbReference type="DisGeNET" id="238"/>
<dbReference type="GeneCards" id="ALK"/>
<dbReference type="GeneReviews" id="ALK"/>
<dbReference type="HGNC" id="HGNC:427">
    <property type="gene designation" value="ALK"/>
</dbReference>
<dbReference type="HPA" id="ENSG00000171094">
    <property type="expression patterns" value="Tissue enhanced (brain, pituitary gland, testis)"/>
</dbReference>
<dbReference type="MalaCards" id="ALK"/>
<dbReference type="MIM" id="105590">
    <property type="type" value="gene"/>
</dbReference>
<dbReference type="MIM" id="613014">
    <property type="type" value="phenotype"/>
</dbReference>
<dbReference type="neXtProt" id="NX_Q9UM73"/>
<dbReference type="OpenTargets" id="ENSG00000171094"/>
<dbReference type="Orphanet" id="300895">
    <property type="disease" value="ALK-positive anaplastic large cell lymphoma"/>
</dbReference>
<dbReference type="Orphanet" id="364043">
    <property type="disease" value="ALK-positive large B-cell lymphoma"/>
</dbReference>
<dbReference type="Orphanet" id="146">
    <property type="disease" value="Differentiated thyroid carcinoma"/>
</dbReference>
<dbReference type="Orphanet" id="178342">
    <property type="disease" value="Inflammatory myofibroblastic tumor"/>
</dbReference>
<dbReference type="Orphanet" id="626">
    <property type="disease" value="Large/giant congenital melanocytic nevus"/>
</dbReference>
<dbReference type="Orphanet" id="635">
    <property type="disease" value="Neuroblastoma"/>
</dbReference>
<dbReference type="PharmGKB" id="PA24719"/>
<dbReference type="VEuPathDB" id="HostDB:ENSG00000171094"/>
<dbReference type="eggNOG" id="KOG1095">
    <property type="taxonomic scope" value="Eukaryota"/>
</dbReference>
<dbReference type="GeneTree" id="ENSGT00940000159280"/>
<dbReference type="InParanoid" id="Q9UM73"/>
<dbReference type="OMA" id="NTACERQ"/>
<dbReference type="OrthoDB" id="73209at2759"/>
<dbReference type="PAN-GO" id="Q9UM73">
    <property type="GO annotations" value="8 GO annotations based on evolutionary models"/>
</dbReference>
<dbReference type="PhylomeDB" id="Q9UM73"/>
<dbReference type="TreeFam" id="TF351636"/>
<dbReference type="BRENDA" id="2.7.10.1">
    <property type="organism ID" value="2681"/>
</dbReference>
<dbReference type="PathwayCommons" id="Q9UM73"/>
<dbReference type="Reactome" id="R-HSA-201556">
    <property type="pathway name" value="Signaling by ALK"/>
</dbReference>
<dbReference type="Reactome" id="R-HSA-9700645">
    <property type="pathway name" value="ALK mutants bind TKIs"/>
</dbReference>
<dbReference type="Reactome" id="R-HSA-9717264">
    <property type="pathway name" value="ASP-3026-resistant ALK mutants"/>
</dbReference>
<dbReference type="Reactome" id="R-HSA-9717301">
    <property type="pathway name" value="NVP-TAE684-resistant ALK mutants"/>
</dbReference>
<dbReference type="Reactome" id="R-HSA-9717316">
    <property type="pathway name" value="alectinib-resistant ALK mutants"/>
</dbReference>
<dbReference type="Reactome" id="R-HSA-9717319">
    <property type="pathway name" value="brigatinib-resistant ALK mutants"/>
</dbReference>
<dbReference type="Reactome" id="R-HSA-9717323">
    <property type="pathway name" value="ceritinib-resistant ALK mutants"/>
</dbReference>
<dbReference type="Reactome" id="R-HSA-9717326">
    <property type="pathway name" value="crizotinib-resistant ALK mutants"/>
</dbReference>
<dbReference type="Reactome" id="R-HSA-9717329">
    <property type="pathway name" value="lorlatinib-resistant ALK mutants"/>
</dbReference>
<dbReference type="Reactome" id="R-HSA-9725370">
    <property type="pathway name" value="Signaling by ALK fusions and activated point mutants"/>
</dbReference>
<dbReference type="Reactome" id="R-HSA-9851151">
    <property type="pathway name" value="MDK and PTN in ALK signaling"/>
</dbReference>
<dbReference type="SignaLink" id="Q9UM73"/>
<dbReference type="SIGNOR" id="Q9UM73"/>
<dbReference type="BioGRID-ORCS" id="238">
    <property type="hits" value="17 hits in 1192 CRISPR screens"/>
</dbReference>
<dbReference type="ChiTaRS" id="ALK">
    <property type="organism name" value="human"/>
</dbReference>
<dbReference type="EvolutionaryTrace" id="Q9UM73"/>
<dbReference type="GeneWiki" id="Anaplastic_lymphoma_kinase"/>
<dbReference type="GenomeRNAi" id="238"/>
<dbReference type="Pharos" id="Q9UM73">
    <property type="development level" value="Tclin"/>
</dbReference>
<dbReference type="PRO" id="PR:Q9UM73"/>
<dbReference type="Proteomes" id="UP000005640">
    <property type="component" value="Chromosome 2"/>
</dbReference>
<dbReference type="RNAct" id="Q9UM73">
    <property type="molecule type" value="protein"/>
</dbReference>
<dbReference type="Bgee" id="ENSG00000171094">
    <property type="expression patterns" value="Expressed in sperm and 156 other cell types or tissues"/>
</dbReference>
<dbReference type="ExpressionAtlas" id="Q9UM73">
    <property type="expression patterns" value="baseline and differential"/>
</dbReference>
<dbReference type="GO" id="GO:0070062">
    <property type="term" value="C:extracellular exosome"/>
    <property type="evidence" value="ECO:0007005"/>
    <property type="project" value="UniProtKB"/>
</dbReference>
<dbReference type="GO" id="GO:0005886">
    <property type="term" value="C:plasma membrane"/>
    <property type="evidence" value="ECO:0000314"/>
    <property type="project" value="UniProtKB"/>
</dbReference>
<dbReference type="GO" id="GO:0032991">
    <property type="term" value="C:protein-containing complex"/>
    <property type="evidence" value="ECO:0000314"/>
    <property type="project" value="MGI"/>
</dbReference>
<dbReference type="GO" id="GO:0043235">
    <property type="term" value="C:receptor complex"/>
    <property type="evidence" value="ECO:0000318"/>
    <property type="project" value="GO_Central"/>
</dbReference>
<dbReference type="GO" id="GO:0005524">
    <property type="term" value="F:ATP binding"/>
    <property type="evidence" value="ECO:0007669"/>
    <property type="project" value="UniProtKB-KW"/>
</dbReference>
<dbReference type="GO" id="GO:0008201">
    <property type="term" value="F:heparin binding"/>
    <property type="evidence" value="ECO:0000314"/>
    <property type="project" value="UniProtKB"/>
</dbReference>
<dbReference type="GO" id="GO:0042802">
    <property type="term" value="F:identical protein binding"/>
    <property type="evidence" value="ECO:0000353"/>
    <property type="project" value="IntAct"/>
</dbReference>
<dbReference type="GO" id="GO:0004713">
    <property type="term" value="F:protein tyrosine kinase activity"/>
    <property type="evidence" value="ECO:0000314"/>
    <property type="project" value="MGI"/>
</dbReference>
<dbReference type="GO" id="GO:0030298">
    <property type="term" value="F:receptor signaling protein tyrosine kinase activator activity"/>
    <property type="evidence" value="ECO:0000314"/>
    <property type="project" value="UniProtKB"/>
</dbReference>
<dbReference type="GO" id="GO:0004714">
    <property type="term" value="F:transmembrane receptor protein tyrosine kinase activity"/>
    <property type="evidence" value="ECO:0000314"/>
    <property type="project" value="UniProtKB"/>
</dbReference>
<dbReference type="GO" id="GO:0030534">
    <property type="term" value="P:adult behavior"/>
    <property type="evidence" value="ECO:0007669"/>
    <property type="project" value="Ensembl"/>
</dbReference>
<dbReference type="GO" id="GO:0007169">
    <property type="term" value="P:cell surface receptor protein tyrosine kinase signaling pathway"/>
    <property type="evidence" value="ECO:0000314"/>
    <property type="project" value="UniProt"/>
</dbReference>
<dbReference type="GO" id="GO:0097009">
    <property type="term" value="P:energy homeostasis"/>
    <property type="evidence" value="ECO:0000250"/>
    <property type="project" value="UniProtKB"/>
</dbReference>
<dbReference type="GO" id="GO:0021766">
    <property type="term" value="P:hippocampus development"/>
    <property type="evidence" value="ECO:0007669"/>
    <property type="project" value="Ensembl"/>
</dbReference>
<dbReference type="GO" id="GO:0050995">
    <property type="term" value="P:negative regulation of lipid catabolic process"/>
    <property type="evidence" value="ECO:0000250"/>
    <property type="project" value="UniProtKB"/>
</dbReference>
<dbReference type="GO" id="GO:0048666">
    <property type="term" value="P:neuron development"/>
    <property type="evidence" value="ECO:0000304"/>
    <property type="project" value="UniProtKB"/>
</dbReference>
<dbReference type="GO" id="GO:0038083">
    <property type="term" value="P:peptidyl-tyrosine autophosphorylation"/>
    <property type="evidence" value="ECO:0000314"/>
    <property type="project" value="UniProtKB"/>
</dbReference>
<dbReference type="GO" id="GO:0016310">
    <property type="term" value="P:phosphorylation"/>
    <property type="evidence" value="ECO:0000314"/>
    <property type="project" value="UniProtKB"/>
</dbReference>
<dbReference type="GO" id="GO:1900006">
    <property type="term" value="P:positive regulation of dendrite development"/>
    <property type="evidence" value="ECO:0000250"/>
    <property type="project" value="UniProtKB"/>
</dbReference>
<dbReference type="GO" id="GO:0051092">
    <property type="term" value="P:positive regulation of NF-kappaB transcription factor activity"/>
    <property type="evidence" value="ECO:0000304"/>
    <property type="project" value="UniProtKB"/>
</dbReference>
<dbReference type="GO" id="GO:0046777">
    <property type="term" value="P:protein autophosphorylation"/>
    <property type="evidence" value="ECO:0000314"/>
    <property type="project" value="UniProtKB"/>
</dbReference>
<dbReference type="GO" id="GO:0042981">
    <property type="term" value="P:regulation of apoptotic process"/>
    <property type="evidence" value="ECO:0000304"/>
    <property type="project" value="UniProtKB"/>
</dbReference>
<dbReference type="GO" id="GO:0042127">
    <property type="term" value="P:regulation of cell population proliferation"/>
    <property type="evidence" value="ECO:0000318"/>
    <property type="project" value="GO_Central"/>
</dbReference>
<dbReference type="GO" id="GO:0060159">
    <property type="term" value="P:regulation of dopamine receptor signaling pathway"/>
    <property type="evidence" value="ECO:0007669"/>
    <property type="project" value="Ensembl"/>
</dbReference>
<dbReference type="GO" id="GO:0045664">
    <property type="term" value="P:regulation of neuron differentiation"/>
    <property type="evidence" value="ECO:0000318"/>
    <property type="project" value="GO_Central"/>
</dbReference>
<dbReference type="GO" id="GO:0090648">
    <property type="term" value="P:response to environmental enrichment"/>
    <property type="evidence" value="ECO:0007669"/>
    <property type="project" value="Ensembl"/>
</dbReference>
<dbReference type="GO" id="GO:0006950">
    <property type="term" value="P:response to stress"/>
    <property type="evidence" value="ECO:0007669"/>
    <property type="project" value="Ensembl"/>
</dbReference>
<dbReference type="GO" id="GO:0007165">
    <property type="term" value="P:signal transduction"/>
    <property type="evidence" value="ECO:0000304"/>
    <property type="project" value="UniProtKB"/>
</dbReference>
<dbReference type="GO" id="GO:0036269">
    <property type="term" value="P:swimming behavior"/>
    <property type="evidence" value="ECO:0007669"/>
    <property type="project" value="Ensembl"/>
</dbReference>
<dbReference type="CDD" id="cd00112">
    <property type="entry name" value="LDLa"/>
    <property type="match status" value="1"/>
</dbReference>
<dbReference type="CDD" id="cd06263">
    <property type="entry name" value="MAM"/>
    <property type="match status" value="2"/>
</dbReference>
<dbReference type="CDD" id="cd05036">
    <property type="entry name" value="PTKc_ALK_LTK"/>
    <property type="match status" value="1"/>
</dbReference>
<dbReference type="FunFam" id="1.10.510.10:FF:000113">
    <property type="entry name" value="Tyrosine-protein kinase receptor"/>
    <property type="match status" value="1"/>
</dbReference>
<dbReference type="FunFam" id="2.60.120.200:FF:000132">
    <property type="entry name" value="Tyrosine-protein kinase receptor"/>
    <property type="match status" value="1"/>
</dbReference>
<dbReference type="FunFam" id="2.60.120.200:FF:000154">
    <property type="entry name" value="Tyrosine-protein kinase receptor"/>
    <property type="match status" value="1"/>
</dbReference>
<dbReference type="FunFam" id="3.30.200.20:FF:000117">
    <property type="entry name" value="Tyrosine-protein kinase receptor"/>
    <property type="match status" value="1"/>
</dbReference>
<dbReference type="Gene3D" id="2.60.120.200">
    <property type="match status" value="2"/>
</dbReference>
<dbReference type="Gene3D" id="4.10.400.10">
    <property type="entry name" value="Low-density Lipoprotein Receptor"/>
    <property type="match status" value="1"/>
</dbReference>
<dbReference type="Gene3D" id="3.30.200.20">
    <property type="entry name" value="Phosphorylase Kinase, domain 1"/>
    <property type="match status" value="1"/>
</dbReference>
<dbReference type="Gene3D" id="1.10.510.10">
    <property type="entry name" value="Transferase(Phosphotransferase) domain 1"/>
    <property type="match status" value="1"/>
</dbReference>
<dbReference type="InterPro" id="IPR055163">
    <property type="entry name" value="ALK/LTK-like_GRD"/>
</dbReference>
<dbReference type="InterPro" id="IPR013320">
    <property type="entry name" value="ConA-like_dom_sf"/>
</dbReference>
<dbReference type="InterPro" id="IPR011009">
    <property type="entry name" value="Kinase-like_dom_sf"/>
</dbReference>
<dbReference type="InterPro" id="IPR036055">
    <property type="entry name" value="LDL_receptor-like_sf"/>
</dbReference>
<dbReference type="InterPro" id="IPR002172">
    <property type="entry name" value="LDrepeatLR_classA_rpt"/>
</dbReference>
<dbReference type="InterPro" id="IPR000998">
    <property type="entry name" value="MAM_dom"/>
</dbReference>
<dbReference type="InterPro" id="IPR000719">
    <property type="entry name" value="Prot_kinase_dom"/>
</dbReference>
<dbReference type="InterPro" id="IPR017441">
    <property type="entry name" value="Protein_kinase_ATP_BS"/>
</dbReference>
<dbReference type="InterPro" id="IPR050122">
    <property type="entry name" value="RTK"/>
</dbReference>
<dbReference type="InterPro" id="IPR001245">
    <property type="entry name" value="Ser-Thr/Tyr_kinase_cat_dom"/>
</dbReference>
<dbReference type="InterPro" id="IPR008266">
    <property type="entry name" value="Tyr_kinase_AS"/>
</dbReference>
<dbReference type="InterPro" id="IPR020635">
    <property type="entry name" value="Tyr_kinase_cat_dom"/>
</dbReference>
<dbReference type="InterPro" id="IPR002011">
    <property type="entry name" value="Tyr_kinase_rcpt_2_CS"/>
</dbReference>
<dbReference type="PANTHER" id="PTHR24416:SF276">
    <property type="entry name" value="ALK TYROSINE KINASE RECEPTOR"/>
    <property type="match status" value="1"/>
</dbReference>
<dbReference type="PANTHER" id="PTHR24416">
    <property type="entry name" value="TYROSINE-PROTEIN KINASE RECEPTOR"/>
    <property type="match status" value="1"/>
</dbReference>
<dbReference type="Pfam" id="PF12810">
    <property type="entry name" value="ALK_LTK_GRD"/>
    <property type="match status" value="1"/>
</dbReference>
<dbReference type="Pfam" id="PF00629">
    <property type="entry name" value="MAM"/>
    <property type="match status" value="1"/>
</dbReference>
<dbReference type="Pfam" id="PF07714">
    <property type="entry name" value="PK_Tyr_Ser-Thr"/>
    <property type="match status" value="1"/>
</dbReference>
<dbReference type="PRINTS" id="PR00109">
    <property type="entry name" value="TYRKINASE"/>
</dbReference>
<dbReference type="SMART" id="SM00192">
    <property type="entry name" value="LDLa"/>
    <property type="match status" value="1"/>
</dbReference>
<dbReference type="SMART" id="SM00219">
    <property type="entry name" value="TyrKc"/>
    <property type="match status" value="1"/>
</dbReference>
<dbReference type="SUPFAM" id="SSF49899">
    <property type="entry name" value="Concanavalin A-like lectins/glucanases"/>
    <property type="match status" value="2"/>
</dbReference>
<dbReference type="SUPFAM" id="SSF57424">
    <property type="entry name" value="LDL receptor-like module"/>
    <property type="match status" value="1"/>
</dbReference>
<dbReference type="SUPFAM" id="SSF56112">
    <property type="entry name" value="Protein kinase-like (PK-like)"/>
    <property type="match status" value="1"/>
</dbReference>
<dbReference type="PROSITE" id="PS50060">
    <property type="entry name" value="MAM_2"/>
    <property type="match status" value="2"/>
</dbReference>
<dbReference type="PROSITE" id="PS00107">
    <property type="entry name" value="PROTEIN_KINASE_ATP"/>
    <property type="match status" value="1"/>
</dbReference>
<dbReference type="PROSITE" id="PS50011">
    <property type="entry name" value="PROTEIN_KINASE_DOM"/>
    <property type="match status" value="1"/>
</dbReference>
<dbReference type="PROSITE" id="PS00109">
    <property type="entry name" value="PROTEIN_KINASE_TYR"/>
    <property type="match status" value="1"/>
</dbReference>
<dbReference type="PROSITE" id="PS00239">
    <property type="entry name" value="RECEPTOR_TYR_KIN_II"/>
    <property type="match status" value="1"/>
</dbReference>
<accession>Q9UM73</accession>
<accession>A6P4T4</accession>
<accession>A6P4V4</accession>
<accession>Q4ZFX9</accession>
<accession>Q53QQ6</accession>
<accession>Q53RZ4</accession>
<accession>Q59FI3</accession>
<accession>Q9Y4K6</accession>
<sequence length="1620" mass="176442">MGAIGLLWLLPLLLSTAAVGSGMGTGQRAGSPAAGPPLQPREPLSYSRLQRKSLAVDFVVPSLFRVYARDLLLPPSSSELKAGRPEARGSLALDCAPLLRLLGPAPGVSWTAGSPAPAEARTLSRVLKGGSVRKLRRAKQLVLELGEEAILEGCVGPPGEAAVGLLQFNLSELFSWWIRQGEGRLRIRLMPEKKASEVGREGRLSAAIRASQPRLLFQIFGTGHSSLESPTNMPSPSPDYFTWNLTWIMKDSFPFLSHRSRYGLECSFDFPCELEYSPPLHDLRNQSWSWRRIPSEEASQMDLLDGPGAERSKEMPRGSFLLLNTSADSKHTILSPWMRSSSEHCTLAVSVHRHLQPSGRYIAQLLPHNEAAREILLMPTPGKHGWTVLQGRIGRPDNPFRVALEYISSGNRSLSAVDFFALKNCSEGTSPGSKMALQSSFTCWNGTVLQLGQACDFHQDCAQGEDESQMCRKLPVGFYCNFEDGFCGWTQGTLSPHTPQWQVRTLKDARFQDHQDHALLLSTTDVPASESATVTSATFPAPIKSSPCELRMSWLIRGVLRGNVSLVLVENKTGKEQGRMVWHVAAYEGLSLWQWMVLPLLDVSDRFWLQMVAWWGQGSRAIVAFDNISISLDCYLTISGEDKILQNTAPKSRNLFERNPNKELKPGENSPRQTPIFDPTVHWLFTTCGASGPHGPTQAQCNNAYQNSNLSVEVGSEGPLKGIQIWKVPATDTYSISGYGAAGGKGGKNTMMRSHGVSVLGIFNLEKDDMLYILVGQQGEDACPSTNQLIQKVCIGENNVIEEEIRVNRSVHEWAGGGGGGGGATYVFKMKDGVPVPLIIAAGGGGRAYGAKTDTFHPERLENNSSVLGLNGNSGAAGGGGGWNDNTSLLWAGKSLQEGATGGHSCPQAMKKWGWETRGGFGGGGGGCSSGGGGGGYIGGNAASNNDPEMDGEDGVSFISPLGILYTPALKVMEGHGEVNIKHYLNCSHCEVDECHMDPESHKVICFCDHGTVLAEDGVSCIVSPTPEPHLPLSLILSVVTSALVAALVLAFSGIMIVYRRKHQELQAMQMELQSPEYKLSKLRTSTIMTDYNPNYCFAGKTSSISDLKEVPRKNITLIRGLGHGAFGEVYEGQVSGMPNDPSPLQVAVKTLPEVCSEQDELDFLMEALIISKFNHQNIVRCIGVSLQSLPRFILLELMAGGDLKSFLRETRPRPSQPSSLAMLDLLHVARDIACGCQYLEENHFIHRDIAARNCLLTCPGPGRVAKIGDFGMARDIYRASYYRKGGCAMLPVKWMPPEAFMEGIFTSKTDTWSFGVLLWEIFSLGYMPYPSKSNQEVLEFVTSGGRMDPPKNCPGPVYRIMTQCWQHQPEDRPNFAIILERIEYCTQDPDVINTALPIEYGPLVEEEEKVPVRPKDPEGVPPLLVSQQAKREEERSPAAPPPLPTTSSGKAAKKPTAAEISVRVPRGPAVEGGHVNMAFSQSNPPSELHKVHGSRNKPTSLWNPTYGSWFTEKPTKKNNPIAKKEPHDRGNLGLEGSCTVPPNVATGRLPGASLLLEPSSLTANMKEVPLFRLRHFPCGNVNYGYQQQGLPLEAATAPGAGHYEDTILKSKNSMNQPGP</sequence>
<reference key="1">
    <citation type="journal article" date="1997" name="Oncogene">
        <title>ALK, the chromosome 2 gene locus altered by the t(2;5) in non-Hodgkin's lymphoma, encodes a novel neural receptor tyrosine kinase that is highly related to leukocyte tyrosine kinase (LTK).</title>
        <authorList>
            <person name="Morris S.W."/>
            <person name="Naeve C.W."/>
            <person name="Mathew P."/>
            <person name="James P.L."/>
            <person name="Kirstein M.N."/>
            <person name="Cui X."/>
            <person name="Witte D.P."/>
        </authorList>
    </citation>
    <scope>NUCLEOTIDE SEQUENCE [MRNA]</scope>
    <scope>SUBCELLULAR LOCATION</scope>
    <scope>TISSUE SPECIFICITY</scope>
    <scope>GLYCOSYLATION</scope>
    <scope>VARIANT VAL-1461</scope>
</reference>
<reference key="2">
    <citation type="journal article" date="1997" name="Oncogene">
        <authorList>
            <person name="Morris S.W."/>
            <person name="Naeve C.W."/>
            <person name="Mathew P."/>
            <person name="James P.L."/>
            <person name="Kirstein M.N."/>
            <person name="Cui X."/>
            <person name="Witte D.P."/>
        </authorList>
    </citation>
    <scope>ERRATUM OF PUBMED:9174053</scope>
</reference>
<reference key="3">
    <citation type="journal article" date="1997" name="Oncogene">
        <title>Molecular characterization of ALK, a receptor tyrosine kinase expressed specifically in the nervous system.</title>
        <authorList>
            <person name="Iwahara T."/>
            <person name="Fujimoto J."/>
            <person name="Wen D."/>
            <person name="Cupples R."/>
            <person name="Bucay N."/>
            <person name="Arakawa T."/>
            <person name="Mori S."/>
            <person name="Ratzkin B."/>
            <person name="Yamamoto T."/>
        </authorList>
    </citation>
    <scope>NUCLEOTIDE SEQUENCE [MRNA]</scope>
    <scope>VARIANTS VAL-1461; ARG-1491 AND GLU-1529</scope>
</reference>
<reference key="4">
    <citation type="submission" date="2005-03" db="EMBL/GenBank/DDBJ databases">
        <authorList>
            <person name="Totoki Y."/>
            <person name="Toyoda A."/>
            <person name="Takeda T."/>
            <person name="Sakaki Y."/>
            <person name="Tanaka A."/>
            <person name="Yokoyama S."/>
            <person name="Ohara O."/>
            <person name="Nagase T."/>
            <person name="Kikuno R.F."/>
        </authorList>
    </citation>
    <scope>NUCLEOTIDE SEQUENCE [LARGE SCALE MRNA]</scope>
    <scope>VARIANTS VAL-1461; ARG-1491 AND GLU-1529</scope>
    <source>
        <tissue>Brain</tissue>
    </source>
</reference>
<reference key="5">
    <citation type="journal article" date="2005" name="Nature">
        <title>Generation and annotation of the DNA sequences of human chromosomes 2 and 4.</title>
        <authorList>
            <person name="Hillier L.W."/>
            <person name="Graves T.A."/>
            <person name="Fulton R.S."/>
            <person name="Fulton L.A."/>
            <person name="Pepin K.H."/>
            <person name="Minx P."/>
            <person name="Wagner-McPherson C."/>
            <person name="Layman D."/>
            <person name="Wylie K."/>
            <person name="Sekhon M."/>
            <person name="Becker M.C."/>
            <person name="Fewell G.A."/>
            <person name="Delehaunty K.D."/>
            <person name="Miner T.L."/>
            <person name="Nash W.E."/>
            <person name="Kremitzki C."/>
            <person name="Oddy L."/>
            <person name="Du H."/>
            <person name="Sun H."/>
            <person name="Bradshaw-Cordum H."/>
            <person name="Ali J."/>
            <person name="Carter J."/>
            <person name="Cordes M."/>
            <person name="Harris A."/>
            <person name="Isak A."/>
            <person name="van Brunt A."/>
            <person name="Nguyen C."/>
            <person name="Du F."/>
            <person name="Courtney L."/>
            <person name="Kalicki J."/>
            <person name="Ozersky P."/>
            <person name="Abbott S."/>
            <person name="Armstrong J."/>
            <person name="Belter E.A."/>
            <person name="Caruso L."/>
            <person name="Cedroni M."/>
            <person name="Cotton M."/>
            <person name="Davidson T."/>
            <person name="Desai A."/>
            <person name="Elliott G."/>
            <person name="Erb T."/>
            <person name="Fronick C."/>
            <person name="Gaige T."/>
            <person name="Haakenson W."/>
            <person name="Haglund K."/>
            <person name="Holmes A."/>
            <person name="Harkins R."/>
            <person name="Kim K."/>
            <person name="Kruchowski S.S."/>
            <person name="Strong C.M."/>
            <person name="Grewal N."/>
            <person name="Goyea E."/>
            <person name="Hou S."/>
            <person name="Levy A."/>
            <person name="Martinka S."/>
            <person name="Mead K."/>
            <person name="McLellan M.D."/>
            <person name="Meyer R."/>
            <person name="Randall-Maher J."/>
            <person name="Tomlinson C."/>
            <person name="Dauphin-Kohlberg S."/>
            <person name="Kozlowicz-Reilly A."/>
            <person name="Shah N."/>
            <person name="Swearengen-Shahid S."/>
            <person name="Snider J."/>
            <person name="Strong J.T."/>
            <person name="Thompson J."/>
            <person name="Yoakum M."/>
            <person name="Leonard S."/>
            <person name="Pearman C."/>
            <person name="Trani L."/>
            <person name="Radionenko M."/>
            <person name="Waligorski J.E."/>
            <person name="Wang C."/>
            <person name="Rock S.M."/>
            <person name="Tin-Wollam A.-M."/>
            <person name="Maupin R."/>
            <person name="Latreille P."/>
            <person name="Wendl M.C."/>
            <person name="Yang S.-P."/>
            <person name="Pohl C."/>
            <person name="Wallis J.W."/>
            <person name="Spieth J."/>
            <person name="Bieri T.A."/>
            <person name="Berkowicz N."/>
            <person name="Nelson J.O."/>
            <person name="Osborne J."/>
            <person name="Ding L."/>
            <person name="Meyer R."/>
            <person name="Sabo A."/>
            <person name="Shotland Y."/>
            <person name="Sinha P."/>
            <person name="Wohldmann P.E."/>
            <person name="Cook L.L."/>
            <person name="Hickenbotham M.T."/>
            <person name="Eldred J."/>
            <person name="Williams D."/>
            <person name="Jones T.A."/>
            <person name="She X."/>
            <person name="Ciccarelli F.D."/>
            <person name="Izaurralde E."/>
            <person name="Taylor J."/>
            <person name="Schmutz J."/>
            <person name="Myers R.M."/>
            <person name="Cox D.R."/>
            <person name="Huang X."/>
            <person name="McPherson J.D."/>
            <person name="Mardis E.R."/>
            <person name="Clifton S.W."/>
            <person name="Warren W.C."/>
            <person name="Chinwalla A.T."/>
            <person name="Eddy S.R."/>
            <person name="Marra M.A."/>
            <person name="Ovcharenko I."/>
            <person name="Furey T.S."/>
            <person name="Miller W."/>
            <person name="Eichler E.E."/>
            <person name="Bork P."/>
            <person name="Suyama M."/>
            <person name="Torrents D."/>
            <person name="Waterston R.H."/>
            <person name="Wilson R.K."/>
        </authorList>
    </citation>
    <scope>NUCLEOTIDE SEQUENCE [LARGE SCALE GENOMIC DNA]</scope>
</reference>
<reference key="6">
    <citation type="journal article" date="1994" name="Science">
        <title>Fusion of a kinase gene, ALK, to a nucleolar protein gene, NPM, in non-Hodgkin's lymphoma.</title>
        <authorList>
            <person name="Morris S.W."/>
            <person name="Kirstein M.N."/>
            <person name="Valentine M.B."/>
            <person name="Dittmer K.G."/>
            <person name="Shapiro D.N."/>
            <person name="Saltman D.L."/>
            <person name="Look A.T."/>
        </authorList>
    </citation>
    <scope>PARTIAL NUCLEOTIDE SEQUENCE [MRNA]</scope>
    <scope>CHROMOSOMAL TRANSLOCATION WITH NPM1</scope>
    <scope>VARIANT VAL-1461</scope>
</reference>
<reference key="7">
    <citation type="journal article" date="2007" name="Nature">
        <title>Identification of the transforming EML4-ALK fusion gene in non-small-cell lung cancer.</title>
        <authorList>
            <person name="Soda M."/>
            <person name="Choi Y.L."/>
            <person name="Enomoto M."/>
            <person name="Takada S."/>
            <person name="Yamashita Y."/>
            <person name="Ishikawa S."/>
            <person name="Fujiwara S."/>
            <person name="Watanabe H."/>
            <person name="Kurashina K."/>
            <person name="Hatanaka H."/>
            <person name="Bando M."/>
            <person name="Ohno S."/>
            <person name="Ishikawa Y."/>
            <person name="Aburatani H."/>
            <person name="Niki T."/>
            <person name="Sohara Y."/>
            <person name="Sugiyama Y."/>
            <person name="Mano H."/>
        </authorList>
    </citation>
    <scope>NUCLEOTIDE SEQUENCE [MRNA] OF 1059-1620</scope>
    <scope>VARIANTS VAL-1461; ARG-1491 AND GLU-1529</scope>
    <scope>CHROMOSOMAL TRANSLOCATION WITH EML4</scope>
</reference>
<reference key="8">
    <citation type="journal article" date="2001" name="FASEB J.">
        <title>The cytoplasmic truncated receptor tyrosine kinase ALK homodimer immortalizes and cooperates with ras in cellular transformation.</title>
        <authorList>
            <person name="Simonitsch I."/>
            <person name="Polgar D."/>
            <person name="Hajek M."/>
            <person name="Duchek P."/>
            <person name="Skrzypek B."/>
            <person name="Fassl S."/>
            <person name="Lamprecht A."/>
            <person name="Schmidt G."/>
            <person name="Krupitza G."/>
            <person name="Cerni C."/>
        </authorList>
    </citation>
    <scope>FUNCTION AS AN ONCOGENE</scope>
</reference>
<reference key="9">
    <citation type="journal article" date="2001" name="J. Biol. Chem.">
        <title>Activation of anaplastic lymphoma kinase receptor tyrosine kinase induces neuronal differentiation through the mitogen-activated protein kinase pathway.</title>
        <authorList>
            <person name="Souttou B."/>
            <person name="Carvalho N.B."/>
            <person name="Raulais D."/>
            <person name="Vigny M."/>
        </authorList>
    </citation>
    <scope>PHOSPHORYLATION</scope>
    <scope>FUNCTION</scope>
</reference>
<reference key="10">
    <citation type="journal article" date="2001" name="J. Biol. Chem.">
        <title>Identification of anaplastic lymphoma kinase as a receptor for the growth factor pleiotrophin.</title>
        <authorList>
            <person name="Stoica G.E."/>
            <person name="Kuo A."/>
            <person name="Aigner A."/>
            <person name="Sunitha I."/>
            <person name="Souttou B."/>
            <person name="Malerczyk C."/>
            <person name="Caughey D.J."/>
            <person name="Wen D."/>
            <person name="Karavanov A."/>
            <person name="Riegel A.T."/>
            <person name="Wellstein A."/>
        </authorList>
    </citation>
    <scope>INTERACTION WITH PTN</scope>
    <scope>FUNCTION</scope>
</reference>
<reference key="11">
    <citation type="journal article" date="2002" name="Genes Chromosomes Cancer">
        <title>Identification of novel fusion partners of ALK, the anaplastic lymphoma kinase, in anaplastic large-cell lymphoma and inflammatory myofibroblastic tumor.</title>
        <authorList>
            <person name="Cools J."/>
            <person name="Wlodarska I."/>
            <person name="Somers R."/>
            <person name="Mentens N."/>
            <person name="Pedeutour F."/>
            <person name="Maes B."/>
            <person name="De Wolf-Peeters C."/>
            <person name="Pauwels P."/>
            <person name="Hagemeijer A."/>
            <person name="Marynen P."/>
        </authorList>
    </citation>
    <scope>CHROMOSOMAL TRANSLOCATION WITH ALO17 AND CARS</scope>
</reference>
<reference key="12">
    <citation type="journal article" date="2002" name="J. Biol. Chem.">
        <title>Pleiotrophin signaling through anaplastic lymphoma kinase is rate-limiting for glioblastoma growth.</title>
        <authorList>
            <person name="Powers C."/>
            <person name="Aigner A."/>
            <person name="Stoica G.E."/>
            <person name="McDonnell K."/>
            <person name="Wellstein A."/>
        </authorList>
    </citation>
    <scope>FUNCTION</scope>
</reference>
<reference key="13">
    <citation type="journal article" date="2002" name="J. Biol. Chem.">
        <title>Anti-apoptotic signaling of pleiotrophin through its receptor, anaplastic lymphoma kinase.</title>
        <authorList>
            <person name="Bowden E.T."/>
            <person name="Stoica G.E."/>
            <person name="Wellstein A."/>
        </authorList>
    </citation>
    <scope>FUNCTION</scope>
</reference>
<reference key="14">
    <citation type="journal article" date="2002" name="J. Biol. Chem.">
        <title>Midkine binds to anaplastic lymphoma kinase (ALK) and acts as a growth factor for different cell types.</title>
        <authorList>
            <person name="Stoica G.E."/>
            <person name="Kuo A."/>
            <person name="Powers C."/>
            <person name="Bowden E.T."/>
            <person name="Sale E.B."/>
            <person name="Riegel A.T."/>
            <person name="Wellstein A."/>
        </authorList>
    </citation>
    <scope>INTERACTION WITH MDK</scope>
    <scope>FUNCTION</scope>
</reference>
<reference key="15">
    <citation type="journal article" date="2004" name="J. Cell Sci.">
        <title>ALK receptor tyrosine kinase promotes cell growth and neurite outgrowth.</title>
        <authorList>
            <person name="Motegi A."/>
            <person name="Fujimoto J."/>
            <person name="Kotani M."/>
            <person name="Sakuraba H."/>
            <person name="Yamamoto T."/>
        </authorList>
    </citation>
    <scope>INTERACTION WITH CBL; IRS1; PIK3R1; PLCG1 AND SHC1</scope>
    <scope>FUNCTION IN PHOSPHORYLATION OF CBL; IRS1 AND SHC1</scope>
</reference>
<reference key="16">
    <citation type="journal article" date="2005" name="Biochemistry">
        <title>Unique substrate specificity of anaplastic lymphoma kinase (ALK): development of phosphoacceptor peptides for the assay of ALK activity.</title>
        <authorList>
            <person name="Donella-Deana A."/>
            <person name="Marin O."/>
            <person name="Cesaro L."/>
            <person name="Gunby R.H."/>
            <person name="Ferrarese A."/>
            <person name="Coluccia A.M."/>
            <person name="Tartari C.J."/>
            <person name="Mologni L."/>
            <person name="Scapozza L."/>
            <person name="Gambacorti-Passerini C."/>
            <person name="Pinna L.A."/>
        </authorList>
    </citation>
    <scope>SUBSTRATE SPECIFICITY</scope>
    <scope>PHOSPHORYLATION AT TYR-1278</scope>
</reference>
<reference key="17">
    <citation type="journal article" date="2005" name="J. Biol. Chem.">
        <title>Differential induction of glioblastoma migration and growth by two forms of pleiotrophin.</title>
        <authorList>
            <person name="Lu K.V."/>
            <person name="Jong K.A."/>
            <person name="Kim G.Y."/>
            <person name="Singh J."/>
            <person name="Dia E.Q."/>
            <person name="Yoshimoto K."/>
            <person name="Wang M.Y."/>
            <person name="Cloughesy T.F."/>
            <person name="Nelson S.F."/>
            <person name="Mischel P.S."/>
        </authorList>
    </citation>
    <scope>ROLE IN GLIOBLASTOMA</scope>
</reference>
<reference key="18">
    <citation type="journal article" date="2005" name="J. Cell Sci.">
        <title>Role of the subcellular localization of ALK tyrosine kinase domain in neuronal differentiation of PC12 cells.</title>
        <authorList>
            <person name="Gouzi J.Y."/>
            <person name="Moog-Lutz C."/>
            <person name="Vigny M."/>
            <person name="Brunet-de Carvalho N."/>
        </authorList>
    </citation>
    <scope>SUBCELLULAR LOCATION</scope>
    <scope>SUBUNIT</scope>
    <scope>ACTIVITY REGULATION</scope>
    <scope>FUNCTION</scope>
</reference>
<reference key="19">
    <citation type="journal article" date="2005" name="Nat. Biotechnol.">
        <title>Immunoaffinity profiling of tyrosine phosphorylation in cancer cells.</title>
        <authorList>
            <person name="Rush J."/>
            <person name="Moritz A."/>
            <person name="Lee K.A."/>
            <person name="Guo A."/>
            <person name="Goss V.L."/>
            <person name="Spek E.J."/>
            <person name="Zhang H."/>
            <person name="Zha X.-M."/>
            <person name="Polakiewicz R.D."/>
            <person name="Comb M.J."/>
        </authorList>
    </citation>
    <scope>PHOSPHORYLATION [LARGE SCALE ANALYSIS] AT TYR-1078; TYR-1096; TYR-1131 AND TYR-1604</scope>
    <scope>IDENTIFICATION BY MASS SPECTROMETRY [LARGE SCALE ANALYSIS]</scope>
</reference>
<reference key="20">
    <citation type="journal article" date="2006" name="Int. J. Cancer">
        <title>Fusion of the SEC31L1 and ALK genes in an inflammatory myofibroblastic tumor.</title>
        <authorList>
            <person name="Panagopoulos I."/>
            <person name="Nilsson T."/>
            <person name="Domanski H.A."/>
            <person name="Isaksson M."/>
            <person name="Lindblom P."/>
            <person name="Mertens F."/>
            <person name="Mandahl N."/>
        </authorList>
    </citation>
    <scope>CHROMOSOMAL TRANSLOCATION WITH SEC31A</scope>
</reference>
<reference key="21">
    <citation type="journal article" date="2007" name="FEBS Lett.">
        <title>ALK activation induces Shc and FRS2 recruitment: Signaling and phenotypic outcomes in PC12 cells differentiation.</title>
        <authorList>
            <person name="Degoutin J."/>
            <person name="Vigny M."/>
            <person name="Gouzi J.Y."/>
        </authorList>
    </citation>
    <scope>INTERACTION WITH FRS2 AND SHC1</scope>
    <scope>PHOSPHORYLATION AT TYR-1507</scope>
    <scope>MUTAGENESIS OF TYR-1507</scope>
    <scope>FUNCTION IN PHOSPHORYLATION OF FRS2; MAPK1/ERK2; MAPK3/ERK1 AND SHC1</scope>
</reference>
<reference key="22">
    <citation type="journal article" date="2007" name="J. Biol. Chem.">
        <title>Anaplastic lymphoma kinase is activated through the pleiotrophin/receptor protein-tyrosine phosphatase beta/zeta signaling pathway: an alternative mechanism of receptor tyrosine kinase activation.</title>
        <authorList>
            <person name="Perez-Pinera P."/>
            <person name="Zhang W."/>
            <person name="Chang Y."/>
            <person name="Vega J.A."/>
            <person name="Deuel T.F."/>
        </authorList>
    </citation>
    <scope>PHOSPHORYLATION</scope>
    <scope>ACTIVITY REGULATION</scope>
</reference>
<reference key="23">
    <citation type="journal article" date="2007" name="Oncogene">
        <title>Recruitment of insulin receptor substrate-1 and activation of NF-kappaB essential for midkine growth signaling through anaplastic lymphoma kinase.</title>
        <authorList>
            <person name="Kuo A.H."/>
            <person name="Stoica G.E."/>
            <person name="Riegel A.T."/>
            <person name="Wellstein A."/>
        </authorList>
    </citation>
    <scope>INTERACTION WITH IRS1 AND SHC</scope>
    <scope>PHOSPHORYLATION AT TYR-1096</scope>
    <scope>FUNCTION</scope>
</reference>
<reference key="24">
    <citation type="journal article" date="2009" name="Biochem. J.">
        <title>Anaplastic lymphoma kinase: signalling in development and disease.</title>
        <authorList>
            <person name="Palmer R.H."/>
            <person name="Vernersson E."/>
            <person name="Grabbe C."/>
            <person name="Hallberg B."/>
        </authorList>
    </citation>
    <scope>REVIEW ON FUNCTION</scope>
</reference>
<reference key="25">
    <citation type="journal article" date="2012" name="Nat. Med.">
        <title>Identification of new ALK and RET gene fusions from colorectal and lung cancer biopsies.</title>
        <authorList>
            <person name="Lipson D."/>
            <person name="Capelletti M."/>
            <person name="Yelensky R."/>
            <person name="Otto G."/>
            <person name="Parker A."/>
            <person name="Jarosz M."/>
            <person name="Curran J.A."/>
            <person name="Balasubramanian S."/>
            <person name="Bloom T."/>
            <person name="Brennan K.W."/>
            <person name="Donahue A."/>
            <person name="Downing S.R."/>
            <person name="Frampton G.M."/>
            <person name="Garcia L."/>
            <person name="Juhn F."/>
            <person name="Mitchell K.C."/>
            <person name="White E."/>
            <person name="White J."/>
            <person name="Zwirko Z."/>
            <person name="Peretz T."/>
            <person name="Nechushtan H."/>
            <person name="Soussan-Gutman L."/>
            <person name="Kim J."/>
            <person name="Sasaki H."/>
            <person name="Kim H.R."/>
            <person name="Park S.I."/>
            <person name="Ercan D."/>
            <person name="Sheehan C.E."/>
            <person name="Ross J.S."/>
            <person name="Cronin M.T."/>
            <person name="Jaenne P.A."/>
            <person name="Stephens P.J."/>
        </authorList>
    </citation>
    <scope>CHROMOSOMAL TRANSLOCATION WITH WDCP</scope>
</reference>
<reference key="26">
    <citation type="journal article" date="2015" name="Sci. Signal.">
        <title>Heparin is an activating ligand of the orphan receptor tyrosine kinase ALK.</title>
        <authorList>
            <person name="Murray P.B."/>
            <person name="Lax I."/>
            <person name="Reshetnyak A."/>
            <person name="Ligon G.F."/>
            <person name="Lillquist J.S."/>
            <person name="Natoli E.J. Jr."/>
            <person name="Shi X."/>
            <person name="Folta-Stogniew E."/>
            <person name="Gunel M."/>
            <person name="Alvarado D."/>
            <person name="Schlessinger J."/>
        </authorList>
    </citation>
    <scope>ACTIVITY REGULATION</scope>
    <scope>DOMAIN</scope>
    <scope>MUTAGENESIS OF 48-ARG--LYS-52</scope>
</reference>
<reference key="27">
    <citation type="journal article" date="2018" name="Proc. Natl. Acad. Sci. U.S.A.">
        <title>Identification of a biologically active fragment of ALK and LTK-Ligand 2 (augmentor-alpha).</title>
        <authorList>
            <person name="Reshetnyak A.V."/>
            <person name="Mohanty J."/>
            <person name="Tome F."/>
            <person name="Puleo D.E."/>
            <person name="Plotnikov A.N."/>
            <person name="Ahmed M."/>
            <person name="Kaur N."/>
            <person name="Poliakov A."/>
            <person name="Cinnaiyan A.M."/>
            <person name="Lax I."/>
            <person name="Schlessinger J."/>
        </authorList>
    </citation>
    <scope>FUNCTION</scope>
    <scope>CATALYTIC ACTIVITY</scope>
</reference>
<reference key="28">
    <citation type="journal article" date="2021" name="EMBO J.">
        <title>ALK ligand ALKAL2 potentiates MYCN-driven neuroblastoma in the absence of ALK mutation.</title>
        <authorList>
            <person name="Borenaes M."/>
            <person name="Umapathy G."/>
            <person name="Lai W.Y."/>
            <person name="Lind D.E."/>
            <person name="Witek B."/>
            <person name="Guan J."/>
            <person name="Mendoza-Garcia P."/>
            <person name="Masudi T."/>
            <person name="Claeys A."/>
            <person name="Chuang T.P."/>
            <person name="El Wakil A."/>
            <person name="Arefin B."/>
            <person name="Fransson S."/>
            <person name="Koster J."/>
            <person name="Johansson M."/>
            <person name="Gaarder J."/>
            <person name="Van den Eynden J."/>
            <person name="Hallberg B."/>
            <person name="Palmer R.H."/>
        </authorList>
    </citation>
    <scope>FUNCTION</scope>
</reference>
<reference key="29">
    <citation type="submission" date="2008-04" db="PDB data bank">
        <title>Solution structure of the complex of the PTB domain of SNT-2 and 19-residue peptide (aa 1571-1589) of HALK.</title>
        <authorList>
            <consortium name="RIKEN structural genomics initiative (RSGI)"/>
        </authorList>
    </citation>
    <scope>STRUCTURE BY NMR OF 1571-1589</scope>
</reference>
<reference key="30">
    <citation type="journal article" date="2010" name="Biochem. J.">
        <title>Crystal structure of the ALK (anaplastic lymphoma kinase) catalytic domain.</title>
        <authorList>
            <person name="Lee C.C."/>
            <person name="Jia Y."/>
            <person name="Li N."/>
            <person name="Sun X."/>
            <person name="Ng K."/>
            <person name="Ambing E."/>
            <person name="Gao M.Y."/>
            <person name="Hua S."/>
            <person name="Chen C."/>
            <person name="Kim S."/>
            <person name="Michellys P.Y."/>
            <person name="Lesley S.A."/>
            <person name="Harris J.L."/>
            <person name="Spraggon G."/>
        </authorList>
    </citation>
    <scope>X-RAY CRYSTALLOGRAPHY (1.80 ANGSTROMS) OF 1072-1410 IN COMPLEX WITH ADP</scope>
</reference>
<reference evidence="44 45" key="31">
    <citation type="journal article" date="2010" name="Biochemistry">
        <title>Crystal structures of anaplastic lymphoma kinase in complex with ATP competitive inhibitors.</title>
        <authorList>
            <person name="Bossi R.T."/>
            <person name="Saccardo M.B."/>
            <person name="Ardini E."/>
            <person name="Menichincheri M."/>
            <person name="Rusconi L."/>
            <person name="Magnaghi P."/>
            <person name="Orsini P."/>
            <person name="Avanzi N."/>
            <person name="Borgia A.L."/>
            <person name="Nesi M."/>
            <person name="Bandiera T."/>
            <person name="Fogliatto G."/>
            <person name="Bertrand J.A."/>
        </authorList>
    </citation>
    <scope>X-RAY CRYSTALLOGRAPHY (1.95 ANGSTROMS) OF 1094-1407 IN COMPLEX WITH INHIBITOR</scope>
</reference>
<reference key="32">
    <citation type="journal article" date="2010" name="J. Struct. Funct. Genomics">
        <title>Structural basis for the recognition of nucleophosmin-anaplastic lymphoma kinase oncoprotein by the phosphotyrosine binding domain of Suc1-associated neurotrophic factor-induced tyrosine-phosphorylated target-2.</title>
        <authorList>
            <person name="Koshiba S."/>
            <person name="Li H."/>
            <person name="Motoda Y."/>
            <person name="Tomizawa T."/>
            <person name="Kasai T."/>
            <person name="Tochio N."/>
            <person name="Yabuki T."/>
            <person name="Harada T."/>
            <person name="Watanabe S."/>
            <person name="Tanaka A."/>
            <person name="Shirouzu M."/>
            <person name="Kigawa T."/>
            <person name="Yamamoto T."/>
            <person name="Yokoyama S."/>
        </authorList>
    </citation>
    <scope>STRUCTURE BY NMR OF 1571-1589</scope>
</reference>
<reference key="33">
    <citation type="submission" date="2011-05" db="PDB data bank">
        <title>Structure of L1196M mutant anaplastic lymphoma kinase in complex with crizotinib.</title>
        <authorList>
            <person name="Mctigue M."/>
            <person name="Deng Y."/>
            <person name="Liu W."/>
            <person name="Brooun A."/>
        </authorList>
    </citation>
    <scope>X-RAY CRYSTALLOGRAPHY (1.70 ANGSTROMS) OF 1093-1411 IN COMPLEX WITH CRIZOTINIB</scope>
</reference>
<reference evidence="46" key="34">
    <citation type="journal article" date="2011" name="Cancer Cell">
        <title>CH5424802, a selective ALK inhibitor capable of blocking the resistant gatekeeper mutant.</title>
        <authorList>
            <person name="Sakamoto H."/>
            <person name="Tsukaguchi T."/>
            <person name="Hiroshima S."/>
            <person name="Kodama T."/>
            <person name="Kobayashi T."/>
            <person name="Fukami T.A."/>
            <person name="Oikawa N."/>
            <person name="Tsukuda T."/>
            <person name="Ishii N."/>
            <person name="Aoki Y."/>
        </authorList>
    </citation>
    <scope>X-RAY CRYSTALLOGRAPHY (1.75 ANGSTROMS) OF 1069-1411 IN COMPLEX WITH INHIBITOR</scope>
    <scope>ACTIVITY REGULATION</scope>
</reference>
<reference evidence="47 48 49 50" key="35">
    <citation type="journal article" date="2012" name="J. Biol. Chem.">
        <title>The R1275Q neuroblastoma mutant and certain ATP-competitive inhibitors stabilize alternative activation loop conformations of anaplastic lymphoma kinase.</title>
        <authorList>
            <person name="Epstein L.F."/>
            <person name="Chen H."/>
            <person name="Emkey R."/>
            <person name="Whittington D.A."/>
        </authorList>
    </citation>
    <scope>X-RAY CRYSTALLOGRAPHY (1.70 ANGSTROMS) OF 1084-1410</scope>
    <scope>VARIANT NBLST3 GLN-1275</scope>
</reference>
<reference key="36">
    <citation type="journal article" date="2021" name="Nature">
        <title>Structural basis of cytokine-mediated activation of ALK family receptors.</title>
        <authorList>
            <person name="De Munck S."/>
            <person name="Provost M."/>
            <person name="Kurikawa M."/>
            <person name="Omori I."/>
            <person name="Mukohyama J."/>
            <person name="Felix J."/>
            <person name="Bloch Y."/>
            <person name="Abdel-Wahab O."/>
            <person name="Bazan J.F."/>
            <person name="Yoshimi A."/>
            <person name="Savvides S.N."/>
        </authorList>
    </citation>
    <scope>STRUCTURE BY ELECTRON MICROSCOPY (4.17 ANGSTROMS) OF 648-985 IN COMPLEX WITH ALKAL2</scope>
    <scope>X-RAY CRYSTALLOGRAPHY (2.81 ANGSTROMS) OF 648-1030</scope>
    <scope>FUNCTION</scope>
    <scope>ACTIVITY REGULATION</scope>
    <scope>DOMAIN</scope>
</reference>
<reference key="37">
    <citation type="journal article" date="2021" name="Nature">
        <title>Mechanism for the activation of the anaplastic lymphoma kinase receptor.</title>
        <authorList>
            <person name="Reshetnyak A.V."/>
            <person name="Rossi P."/>
            <person name="Myasnikov A.G."/>
            <person name="Sowaileh M."/>
            <person name="Mohanty J."/>
            <person name="Nourse A."/>
            <person name="Miller D.J."/>
            <person name="Lax I."/>
            <person name="Schlessinger J."/>
            <person name="Kalodimos C.G."/>
        </authorList>
    </citation>
    <scope>STRUCTURE BY ELECTRON MICROSCOPY (1.50 ANGSTROMS) OF 648-1025 IN COMPLEX WITH ALKAL2</scope>
    <scope>FUNCTION</scope>
    <scope>CATALYTIC ACTIVITY</scope>
    <scope>SUBCELLULAR LOCATION</scope>
    <scope>SUBUNIT</scope>
    <scope>ACTIVITY REGULATION</scope>
    <scope>AUTOPHOSPHORYLATION</scope>
    <scope>DOMAIN</scope>
    <scope>MUTAGENESIS OF GLU-859; TYR-966; GLU-974 AND GLU-994</scope>
</reference>
<reference key="38">
    <citation type="journal article" date="2007" name="Nature">
        <title>Patterns of somatic mutation in human cancer genomes.</title>
        <authorList>
            <person name="Greenman C."/>
            <person name="Stephens P."/>
            <person name="Smith R."/>
            <person name="Dalgliesh G.L."/>
            <person name="Hunter C."/>
            <person name="Bignell G."/>
            <person name="Davies H."/>
            <person name="Teague J."/>
            <person name="Butler A."/>
            <person name="Stevens C."/>
            <person name="Edkins S."/>
            <person name="O'Meara S."/>
            <person name="Vastrik I."/>
            <person name="Schmidt E.E."/>
            <person name="Avis T."/>
            <person name="Barthorpe S."/>
            <person name="Bhamra G."/>
            <person name="Buck G."/>
            <person name="Choudhury B."/>
            <person name="Clements J."/>
            <person name="Cole J."/>
            <person name="Dicks E."/>
            <person name="Forbes S."/>
            <person name="Gray K."/>
            <person name="Halliday K."/>
            <person name="Harrison R."/>
            <person name="Hills K."/>
            <person name="Hinton J."/>
            <person name="Jenkinson A."/>
            <person name="Jones D."/>
            <person name="Menzies A."/>
            <person name="Mironenko T."/>
            <person name="Perry J."/>
            <person name="Raine K."/>
            <person name="Richardson D."/>
            <person name="Shepherd R."/>
            <person name="Small A."/>
            <person name="Tofts C."/>
            <person name="Varian J."/>
            <person name="Webb T."/>
            <person name="West S."/>
            <person name="Widaa S."/>
            <person name="Yates A."/>
            <person name="Cahill D.P."/>
            <person name="Louis D.N."/>
            <person name="Goldstraw P."/>
            <person name="Nicholson A.G."/>
            <person name="Brasseur F."/>
            <person name="Looijenga L."/>
            <person name="Weber B.L."/>
            <person name="Chiew Y.-E."/>
            <person name="DeFazio A."/>
            <person name="Greaves M.F."/>
            <person name="Green A.R."/>
            <person name="Campbell P."/>
            <person name="Birney E."/>
            <person name="Easton D.F."/>
            <person name="Chenevix-Trench G."/>
            <person name="Tan M.-H."/>
            <person name="Khoo S.K."/>
            <person name="Teh B.T."/>
            <person name="Yuen S.T."/>
            <person name="Leung S.Y."/>
            <person name="Wooster R."/>
            <person name="Futreal P.A."/>
            <person name="Stratton M.R."/>
        </authorList>
    </citation>
    <scope>VARIANTS [LARGE SCALE ANALYSIS] LEU-90; LEU-163; GLN-296; ALA-476; PHE-560; ILE-680; THR-704; SER-877; MET-1012; ASP-1121; THR-1274; LEU-1328; ASN-1416; LYS-1419; ARG-1429; ARG-1491 AND GLU-1529</scope>
</reference>
<reference key="39">
    <citation type="journal article" date="2008" name="Nature">
        <title>Identification of ALK as a major familial neuroblastoma predisposition gene.</title>
        <authorList>
            <person name="Mosse Y.P."/>
            <person name="Laudenslager M."/>
            <person name="Longo L."/>
            <person name="Cole K.A."/>
            <person name="Wood A."/>
            <person name="Attiyeh E.F."/>
            <person name="Laquaglia M.J."/>
            <person name="Sennett R."/>
            <person name="Lynch J.E."/>
            <person name="Perri P."/>
            <person name="Laureys G."/>
            <person name="Speleman F."/>
            <person name="Kim C."/>
            <person name="Hou C."/>
            <person name="Hakonarson H."/>
            <person name="Torkamani A."/>
            <person name="Schork N.J."/>
            <person name="Brodeur G.M."/>
            <person name="Tonini G.P."/>
            <person name="Rappaport E."/>
            <person name="Devoto M."/>
            <person name="Maris J.M."/>
        </authorList>
    </citation>
    <scope>VARIANTS NBLST3 ASN-1091; ALA-1128; ARG-1166; ASN-1171; ILE-1174; PRO-1192; CYS-1245; VAL-1245; THR-1250 AND GLN-1275</scope>
</reference>
<reference key="40">
    <citation type="journal article" date="2008" name="Nature">
        <title>Somatic and germline activating mutations of the ALK kinase receptor in neuroblastoma.</title>
        <authorList>
            <person name="Janoueix-Lerosey I."/>
            <person name="Lequin D."/>
            <person name="Brugieres L."/>
            <person name="Ribeiro A."/>
            <person name="de Pontual L."/>
            <person name="Combaret V."/>
            <person name="Raynal V."/>
            <person name="Puisieux A."/>
            <person name="Schleiermacher G."/>
            <person name="Pierron G."/>
            <person name="Valteau-Couanet D."/>
            <person name="Frebourg T."/>
            <person name="Michon J."/>
            <person name="Lyonnet S."/>
            <person name="Amiel J."/>
            <person name="Delattre O."/>
        </authorList>
    </citation>
    <scope>VARIANTS NBLST3 VAL-1174; LEU-1174; CYS-1174; PRO-1192; GLN-1275 AND SER-1278</scope>
    <scope>VARIANT LEU-1275</scope>
</reference>
<reference key="41">
    <citation type="journal article" date="2008" name="Nature">
        <title>Activating mutations in ALK provide a therapeutic target in neuroblastoma.</title>
        <authorList>
            <person name="George R.E."/>
            <person name="Sanda T."/>
            <person name="Hanna M."/>
            <person name="Froehling S."/>
            <person name="Luther W. II"/>
            <person name="Zhang J."/>
            <person name="Ahn Y."/>
            <person name="Zhou W."/>
            <person name="London W.B."/>
            <person name="McGrady P."/>
            <person name="Xue L."/>
            <person name="Zozulya S."/>
            <person name="Gregor V.E."/>
            <person name="Webb T.R."/>
            <person name="Gray N.S."/>
            <person name="Gilliland D.G."/>
            <person name="Diller L."/>
            <person name="Greulich H."/>
            <person name="Morris S.W."/>
            <person name="Meyerson M."/>
            <person name="Look A.T."/>
        </authorList>
    </citation>
    <scope>VARIANTS NBLST3 MET-1151; LEU-1174; THR-1234; CYS-1245 AND GLN-1275</scope>
</reference>
<reference key="42">
    <citation type="journal article" date="2011" name="Oncogene">
        <title>The constitutive activity of the ALK mutated at positions F1174 or R1275 impairs receptor trafficking.</title>
        <authorList>
            <person name="Mazot P."/>
            <person name="Cazes A."/>
            <person name="Boutterin M.C."/>
            <person name="Figueiredo A."/>
            <person name="Raynal V."/>
            <person name="Combaret V."/>
            <person name="Hallberg B."/>
            <person name="Palmer R.H."/>
            <person name="Delattre O."/>
            <person name="Janoueix-Lerosey I."/>
            <person name="Vigny M."/>
        </authorList>
    </citation>
    <scope>CHARACTERIZATION OF VARIANTS NBLST3 LEU-1174; VAL-1174 AND GLN-1275</scope>
</reference>
<gene>
    <name evidence="41 43" type="primary">ALK</name>
</gene>
<proteinExistence type="evidence at protein level"/>
<organism>
    <name type="scientific">Homo sapiens</name>
    <name type="common">Human</name>
    <dbReference type="NCBI Taxonomy" id="9606"/>
    <lineage>
        <taxon>Eukaryota</taxon>
        <taxon>Metazoa</taxon>
        <taxon>Chordata</taxon>
        <taxon>Craniata</taxon>
        <taxon>Vertebrata</taxon>
        <taxon>Euteleostomi</taxon>
        <taxon>Mammalia</taxon>
        <taxon>Eutheria</taxon>
        <taxon>Euarchontoglires</taxon>
        <taxon>Primates</taxon>
        <taxon>Haplorrhini</taxon>
        <taxon>Catarrhini</taxon>
        <taxon>Hominidae</taxon>
        <taxon>Homo</taxon>
    </lineage>
</organism>
<feature type="signal peptide" evidence="2">
    <location>
        <begin position="1"/>
        <end position="18"/>
    </location>
</feature>
<feature type="chain" id="PRO_0000016740" description="ALK tyrosine kinase receptor">
    <location>
        <begin position="19"/>
        <end position="1620"/>
    </location>
</feature>
<feature type="topological domain" description="Extracellular" evidence="2">
    <location>
        <begin position="19"/>
        <end position="1038"/>
    </location>
</feature>
<feature type="transmembrane region" description="Helical" evidence="2">
    <location>
        <begin position="1039"/>
        <end position="1059"/>
    </location>
</feature>
<feature type="topological domain" description="Cytoplasmic" evidence="2">
    <location>
        <begin position="1060"/>
        <end position="1620"/>
    </location>
</feature>
<feature type="domain" description="MAM 1" evidence="3">
    <location>
        <begin position="264"/>
        <end position="427"/>
    </location>
</feature>
<feature type="domain" description="LDL-receptor class A">
    <location>
        <begin position="437"/>
        <end position="473"/>
    </location>
</feature>
<feature type="domain" description="MAM 2" evidence="3">
    <location>
        <begin position="478"/>
        <end position="636"/>
    </location>
</feature>
<feature type="domain" description="Protein kinase" evidence="4">
    <location>
        <begin position="1116"/>
        <end position="1392"/>
    </location>
</feature>
<feature type="region of interest" description="Heparin-binding region" evidence="35">
    <location>
        <begin position="48"/>
        <end position="70"/>
    </location>
</feature>
<feature type="region of interest" description="Disordered" evidence="6">
    <location>
        <begin position="650"/>
        <end position="674"/>
    </location>
</feature>
<feature type="region of interest" description="EGF-like" evidence="35 36">
    <location>
        <begin position="987"/>
        <end position="1025"/>
    </location>
</feature>
<feature type="region of interest" description="Disordered" evidence="6">
    <location>
        <begin position="1408"/>
        <end position="1463"/>
    </location>
</feature>
<feature type="region of interest" description="Disordered" evidence="6">
    <location>
        <begin position="1514"/>
        <end position="1540"/>
    </location>
</feature>
<feature type="compositionally biased region" description="Basic and acidic residues" evidence="6">
    <location>
        <begin position="654"/>
        <end position="666"/>
    </location>
</feature>
<feature type="compositionally biased region" description="Basic and acidic residues" evidence="6">
    <location>
        <begin position="1410"/>
        <end position="1419"/>
    </location>
</feature>
<feature type="active site" description="Proton acceptor" evidence="4 5">
    <location>
        <position position="1249"/>
    </location>
</feature>
<feature type="binding site">
    <location>
        <position position="1124"/>
    </location>
    <ligand>
        <name>ATP</name>
        <dbReference type="ChEBI" id="CHEBI:30616"/>
    </ligand>
</feature>
<feature type="binding site" evidence="4">
    <location>
        <position position="1150"/>
    </location>
    <ligand>
        <name>ATP</name>
        <dbReference type="ChEBI" id="CHEBI:30616"/>
    </ligand>
</feature>
<feature type="binding site">
    <location>
        <begin position="1197"/>
        <end position="1199"/>
    </location>
    <ligand>
        <name>ATP</name>
        <dbReference type="ChEBI" id="CHEBI:30616"/>
    </ligand>
</feature>
<feature type="binding site" evidence="27">
    <location>
        <position position="1270"/>
    </location>
    <ligand>
        <name>ATP</name>
        <dbReference type="ChEBI" id="CHEBI:30616"/>
    </ligand>
</feature>
<feature type="site" description="Breakpoint for translocation to form the EML4-ALK fusion protein (variant 1)" evidence="22">
    <location>
        <begin position="1057"/>
        <end position="1058"/>
    </location>
</feature>
<feature type="site" description="Breakpoint for translocation to form the EML4-ALK fusion protein (variant 2)" evidence="22">
    <location>
        <begin position="1058"/>
        <end position="1059"/>
    </location>
</feature>
<feature type="modified residue" description="Phosphotyrosine" evidence="52">
    <location>
        <position position="1078"/>
    </location>
</feature>
<feature type="modified residue" description="Phosphotyrosine" evidence="1">
    <location>
        <position position="1092"/>
    </location>
</feature>
<feature type="modified residue" description="Phosphotyrosine" evidence="19 52">
    <location>
        <position position="1096"/>
    </location>
</feature>
<feature type="modified residue" description="Phosphotyrosine" evidence="52">
    <location>
        <position position="1131"/>
    </location>
</feature>
<feature type="modified residue" description="Phosphotyrosine" evidence="16">
    <location>
        <position position="1278"/>
    </location>
</feature>
<feature type="modified residue" description="Phosphotyrosine" evidence="20">
    <location>
        <position position="1507"/>
    </location>
</feature>
<feature type="modified residue" description="Phosphotyrosine" evidence="52">
    <location>
        <position position="1604"/>
    </location>
</feature>
<feature type="glycosylation site" description="N-linked (GlcNAc...) asparagine" evidence="2">
    <location>
        <position position="169"/>
    </location>
</feature>
<feature type="glycosylation site" description="N-linked (GlcNAc...) asparagine" evidence="2">
    <location>
        <position position="244"/>
    </location>
</feature>
<feature type="glycosylation site" description="N-linked (GlcNAc...) asparagine" evidence="2">
    <location>
        <position position="285"/>
    </location>
</feature>
<feature type="glycosylation site" description="N-linked (GlcNAc...) asparagine" evidence="2">
    <location>
        <position position="324"/>
    </location>
</feature>
<feature type="glycosylation site" description="N-linked (GlcNAc...) asparagine" evidence="2">
    <location>
        <position position="411"/>
    </location>
</feature>
<feature type="glycosylation site" description="N-linked (GlcNAc...) asparagine" evidence="2">
    <location>
        <position position="424"/>
    </location>
</feature>
<feature type="glycosylation site" description="N-linked (GlcNAc...) asparagine" evidence="2">
    <location>
        <position position="445"/>
    </location>
</feature>
<feature type="glycosylation site" description="N-linked (GlcNAc...) asparagine" evidence="2">
    <location>
        <position position="563"/>
    </location>
</feature>
<feature type="glycosylation site" description="N-linked (GlcNAc...) asparagine" evidence="2">
    <location>
        <position position="571"/>
    </location>
</feature>
<feature type="glycosylation site" description="N-linked (GlcNAc...) asparagine" evidence="2">
    <location>
        <position position="627"/>
    </location>
</feature>
<feature type="glycosylation site" description="N-linked (GlcNAc...) asparagine" evidence="2">
    <location>
        <position position="709"/>
    </location>
</feature>
<feature type="glycosylation site" description="N-linked (GlcNAc...) asparagine" evidence="2">
    <location>
        <position position="808"/>
    </location>
</feature>
<feature type="glycosylation site" description="N-linked (GlcNAc...) asparagine" evidence="2">
    <location>
        <position position="863"/>
    </location>
</feature>
<feature type="glycosylation site" description="N-linked (GlcNAc...) asparagine" evidence="2">
    <location>
        <position position="864"/>
    </location>
</feature>
<feature type="glycosylation site" description="N-linked (GlcNAc...) asparagine" evidence="2">
    <location>
        <position position="886"/>
    </location>
</feature>
<feature type="glycosylation site" description="N-linked (GlcNAc...) asparagine" evidence="2">
    <location>
        <position position="986"/>
    </location>
</feature>
<feature type="disulfide bond" evidence="36 51">
    <location>
        <begin position="688"/>
        <end position="701"/>
    </location>
</feature>
<feature type="disulfide bond" evidence="36 51">
    <location>
        <begin position="783"/>
        <end position="794"/>
    </location>
</feature>
<feature type="disulfide bond" evidence="36 51">
    <location>
        <begin position="906"/>
        <end position="928"/>
    </location>
</feature>
<feature type="disulfide bond" evidence="36 51">
    <location>
        <begin position="987"/>
        <end position="995"/>
    </location>
</feature>
<feature type="disulfide bond" evidence="36 51">
    <location>
        <begin position="990"/>
        <end position="1006"/>
    </location>
</feature>
<feature type="disulfide bond" evidence="36 51">
    <location>
        <begin position="1008"/>
        <end position="1021"/>
    </location>
</feature>
<feature type="sequence variant" id="VAR_041477" description="In dbSNP:rs34617074." evidence="21">
    <original>S</original>
    <variation>L</variation>
    <location>
        <position position="90"/>
    </location>
</feature>
<feature type="sequence variant" id="VAR_041478" description="In dbSNP:rs55697431." evidence="21">
    <original>V</original>
    <variation>L</variation>
    <location>
        <position position="163"/>
    </location>
</feature>
<feature type="sequence variant" id="VAR_041479" description="In dbSNP:rs56077855." evidence="21">
    <original>E</original>
    <variation>Q</variation>
    <location>
        <position position="296"/>
    </location>
</feature>
<feature type="sequence variant" id="VAR_041480" description="In dbSNP:rs35093491." evidence="21">
    <original>V</original>
    <variation>A</variation>
    <location>
        <position position="476"/>
    </location>
</feature>
<feature type="sequence variant" id="VAR_041481" description="In a breast pleomorphic lobular carcinoma sample; somatic mutation." evidence="21">
    <original>L</original>
    <variation>F</variation>
    <location>
        <position position="560"/>
    </location>
</feature>
<feature type="sequence variant" id="VAR_041482" description="In dbSNP:rs35228363." evidence="21">
    <original>T</original>
    <variation>I</variation>
    <location>
        <position position="680"/>
    </location>
</feature>
<feature type="sequence variant" id="VAR_041483" description="In dbSNP:rs34829159." evidence="21">
    <original>A</original>
    <variation>T</variation>
    <location>
        <position position="704"/>
    </location>
</feature>
<feature type="sequence variant" id="VAR_061288" description="In dbSNP:rs55941323.">
    <original>L</original>
    <variation>Q</variation>
    <location>
        <position position="868"/>
    </location>
</feature>
<feature type="sequence variant" id="VAR_041484" description="In an ovarian serous carcinoma sample; somatic mutation; dbSNP:rs746442213." evidence="21">
    <original>A</original>
    <variation>S</variation>
    <location>
        <position position="877"/>
    </location>
</feature>
<feature type="sequence variant" id="VAR_041485" description="In dbSNP:rs35073634." evidence="21">
    <original>T</original>
    <variation>M</variation>
    <location>
        <position position="1012"/>
    </location>
</feature>
<feature type="sequence variant" id="VAR_063850" description="In NBLST3; somatic mutation; dbSNP:rs864309584." evidence="24">
    <original>D</original>
    <variation>N</variation>
    <location>
        <position position="1091"/>
    </location>
</feature>
<feature type="sequence variant" id="VAR_041486" description="In dbSNP:rs55760835." evidence="21">
    <original>G</original>
    <variation>D</variation>
    <location>
        <position position="1121"/>
    </location>
</feature>
<feature type="sequence variant" id="VAR_063851" description="In NBLST3; dbSNP:rs113994088." evidence="24">
    <original>G</original>
    <variation>A</variation>
    <location>
        <position position="1128"/>
    </location>
</feature>
<feature type="sequence variant" id="VAR_063852" description="In NBLST3; dbSNP:rs113994091." evidence="26">
    <original>T</original>
    <variation>M</variation>
    <location>
        <position position="1151"/>
    </location>
</feature>
<feature type="sequence variant" id="VAR_063853" description="In NBLST3; somatic mutation; dbSNP:rs1057520019." evidence="24">
    <original>M</original>
    <variation>R</variation>
    <location>
        <position position="1166"/>
    </location>
</feature>
<feature type="sequence variant" id="VAR_063854" description="In NBLST3; somatic mutation; dbSNP:rs1057519698." evidence="24">
    <original>I</original>
    <variation>N</variation>
    <location>
        <position position="1171"/>
    </location>
</feature>
<feature type="sequence variant" id="VAR_063855" description="In NBLST3; dbSNP:rs1057519697." evidence="25">
    <original>F</original>
    <variation>C</variation>
    <location>
        <position position="1174"/>
    </location>
</feature>
<feature type="sequence variant" id="VAR_063856" description="In NBLST3; somatic mutation; dbSNP:rs281864719." evidence="24">
    <original>F</original>
    <variation>I</variation>
    <location>
        <position position="1174"/>
    </location>
</feature>
<feature type="sequence variant" id="VAR_063857" description="In NBLST3; somatic mutation; constitutively activated; retained in the endoplasmic reticulum and Golgi compartments; dbSNP:rs863225281." evidence="25 26 28">
    <original>F</original>
    <variation>L</variation>
    <location>
        <position position="1174"/>
    </location>
</feature>
<feature type="sequence variant" id="VAR_063858" description="In NBLST3; somatic mutation; constitutively activated; retained in the endoplasmic reticulum and Golgi compartments; dbSNP:rs281864719." evidence="25 28">
    <original>F</original>
    <variation>V</variation>
    <location>
        <position position="1174"/>
    </location>
</feature>
<feature type="sequence variant" id="VAR_063859" description="In NBLST3; dbSNP:rs113994089." evidence="24 25">
    <original>R</original>
    <variation>P</variation>
    <location>
        <position position="1192"/>
    </location>
</feature>
<feature type="sequence variant" id="VAR_063860" description="In NBLST3; somatic mutation; dbSNP:rs2148159408." evidence="26">
    <original>A</original>
    <variation>T</variation>
    <location>
        <position position="1234"/>
    </location>
</feature>
<feature type="sequence variant" id="VAR_063861" description="In NBLST3; somatic mutation; dbSNP:rs863225283." evidence="24 26">
    <original>F</original>
    <variation>C</variation>
    <location>
        <position position="1245"/>
    </location>
</feature>
<feature type="sequence variant" id="VAR_063862" description="In NBLST3; somatic mutation; dbSNP:rs281864720." evidence="24">
    <original>F</original>
    <variation>V</variation>
    <location>
        <position position="1245"/>
    </location>
</feature>
<feature type="sequence variant" id="VAR_063863" description="In NBLST3; somatic mutation; dbSNP:rs113994092." evidence="24">
    <original>I</original>
    <variation>T</variation>
    <location>
        <position position="1250"/>
    </location>
</feature>
<feature type="sequence variant" id="VAR_041487" description="In dbSNP:rs45502292." evidence="21">
    <original>A</original>
    <variation>T</variation>
    <location>
        <position position="1274"/>
    </location>
</feature>
<feature type="sequence variant" id="VAR_063864" description="Observed in neuroblastoma; dbSNP:rs113994087." evidence="25">
    <original>R</original>
    <variation>L</variation>
    <location>
        <position position="1275"/>
    </location>
</feature>
<feature type="sequence variant" id="VAR_063865" description="In NBLST3; constitutively activated; retained in the endoplasmic reticulum and Golgi compartments; dbSNP:rs113994087." evidence="24 25 26 28 31">
    <original>R</original>
    <variation>Q</variation>
    <location>
        <position position="1275"/>
    </location>
</feature>
<feature type="sequence variant" id="VAR_063866" description="In NBLST3; somatic mutation; dbSNP:rs863225285." evidence="25">
    <original>Y</original>
    <variation>S</variation>
    <location>
        <position position="1278"/>
    </location>
</feature>
<feature type="sequence variant" id="VAR_041488" description="In dbSNP:rs56160491." evidence="21">
    <original>M</original>
    <variation>L</variation>
    <location>
        <position position="1328"/>
    </location>
</feature>
<feature type="sequence variant" id="VAR_055987" description="In dbSNP:rs17694720.">
    <original>F</original>
    <variation>S</variation>
    <location>
        <position position="1376"/>
    </location>
</feature>
<feature type="sequence variant" id="VAR_041489" description="In dbSNP:rs55782189." evidence="21">
    <original>K</original>
    <variation>N</variation>
    <location>
        <position position="1416"/>
    </location>
</feature>
<feature type="sequence variant" id="VAR_041490" description="In dbSNP:rs56181542." evidence="21">
    <original>E</original>
    <variation>K</variation>
    <location>
        <position position="1419"/>
    </location>
</feature>
<feature type="sequence variant" id="VAR_041491" description="In dbSNP:rs55906201." evidence="21">
    <original>Q</original>
    <variation>R</variation>
    <location>
        <position position="1429"/>
    </location>
</feature>
<feature type="sequence variant" id="VAR_031042" description="In dbSNP:rs1670283." evidence="22 37 38 39 40">
    <original>I</original>
    <variation>V</variation>
    <location>
        <position position="1461"/>
    </location>
</feature>
<feature type="sequence variant" id="VAR_031043" description="In dbSNP:rs1881420." evidence="21 22 38 40">
    <original>K</original>
    <variation>R</variation>
    <location>
        <position position="1491"/>
    </location>
</feature>
<feature type="sequence variant" id="VAR_031044" description="In dbSNP:rs1881421." evidence="21 22 38 40">
    <original>D</original>
    <variation>E</variation>
    <location>
        <position position="1529"/>
    </location>
</feature>
<feature type="sequence variant" id="VAR_055988" description="In dbSNP:rs1881423.">
    <original>P</original>
    <variation>H</variation>
    <location>
        <position position="1599"/>
    </location>
</feature>
<feature type="mutagenesis site" description="Abolished heparin-binding, leading to decreased ALK activation." evidence="32">
    <original>RLQRK</original>
    <variation>ELQEE</variation>
    <location>
        <begin position="48"/>
        <end position="52"/>
    </location>
</feature>
<feature type="mutagenesis site" description="Slightly decreased autophosphorylation. Decreased autophosphorylation and subsequent activation; when associated with A-974." evidence="36">
    <original>E</original>
    <variation>A</variation>
    <location>
        <position position="859"/>
    </location>
</feature>
<feature type="mutagenesis site" description="Slightly decreased autophosphorylation. Strongly reduced autophosphorylation and subsequent activation; when associated with A-994." evidence="36">
    <original>Y</original>
    <variation>A</variation>
    <location>
        <position position="966"/>
    </location>
</feature>
<feature type="mutagenesis site" description="Slightly decreased autophosphorylation. Decreased autophosphorylation and subsequent activation; when associated with A-859." evidence="36">
    <original>E</original>
    <variation>A</variation>
    <location>
        <position position="974"/>
    </location>
</feature>
<feature type="mutagenesis site" description="SlStrongly reduced autophosphorylation and subsequent activation; when associated with A-966." evidence="36">
    <original>E</original>
    <variation>A</variation>
    <location>
        <position position="994"/>
    </location>
</feature>
<feature type="mutagenesis site" description="Impairs interaction with SHC1." evidence="20">
    <original>Y</original>
    <variation>F</variation>
    <location>
        <position position="1507"/>
    </location>
</feature>
<feature type="sequence conflict" description="In Ref. 1; AAB71619." evidence="42" ref="1">
    <original>P</original>
    <variation>S</variation>
    <location>
        <position position="36"/>
    </location>
</feature>
<feature type="strand" evidence="64">
    <location>
        <begin position="675"/>
        <end position="677"/>
    </location>
</feature>
<feature type="strand" evidence="65">
    <location>
        <begin position="680"/>
        <end position="685"/>
    </location>
</feature>
<feature type="strand" evidence="62">
    <location>
        <begin position="692"/>
        <end position="694"/>
    </location>
</feature>
<feature type="helix" evidence="65">
    <location>
        <begin position="698"/>
        <end position="704"/>
    </location>
</feature>
<feature type="turn" evidence="65">
    <location>
        <begin position="705"/>
        <end position="707"/>
    </location>
</feature>
<feature type="strand" evidence="65">
    <location>
        <begin position="713"/>
        <end position="715"/>
    </location>
</feature>
<feature type="helix" evidence="65">
    <location>
        <begin position="718"/>
        <end position="720"/>
    </location>
</feature>
<feature type="strand" evidence="65">
    <location>
        <begin position="724"/>
        <end position="727"/>
    </location>
</feature>
<feature type="strand" evidence="65">
    <location>
        <begin position="730"/>
        <end position="739"/>
    </location>
</feature>
<feature type="strand" evidence="62">
    <location>
        <begin position="747"/>
        <end position="751"/>
    </location>
</feature>
<feature type="strand" evidence="65">
    <location>
        <begin position="757"/>
        <end position="765"/>
    </location>
</feature>
<feature type="strand" evidence="65">
    <location>
        <begin position="770"/>
        <end position="774"/>
    </location>
</feature>
<feature type="strand" evidence="66">
    <location>
        <begin position="782"/>
        <end position="784"/>
    </location>
</feature>
<feature type="helix" evidence="65">
    <location>
        <begin position="788"/>
        <end position="794"/>
    </location>
</feature>
<feature type="helix" evidence="65">
    <location>
        <begin position="800"/>
        <end position="807"/>
    </location>
</feature>
<feature type="strand" evidence="62">
    <location>
        <begin position="808"/>
        <end position="810"/>
    </location>
</feature>
<feature type="strand" evidence="65">
    <location>
        <begin position="812"/>
        <end position="814"/>
    </location>
</feature>
<feature type="strand" evidence="65">
    <location>
        <begin position="825"/>
        <end position="831"/>
    </location>
</feature>
<feature type="strand" evidence="65">
    <location>
        <begin position="834"/>
        <end position="841"/>
    </location>
</feature>
<feature type="strand" evidence="64">
    <location>
        <begin position="860"/>
        <end position="862"/>
    </location>
</feature>
<feature type="strand" evidence="63">
    <location>
        <begin position="865"/>
        <end position="867"/>
    </location>
</feature>
<feature type="strand" evidence="65">
    <location>
        <begin position="875"/>
        <end position="877"/>
    </location>
</feature>
<feature type="strand" evidence="66">
    <location>
        <begin position="890"/>
        <end position="892"/>
    </location>
</feature>
<feature type="helix" evidence="65">
    <location>
        <begin position="896"/>
        <end position="898"/>
    </location>
</feature>
<feature type="helix" evidence="65">
    <location>
        <begin position="907"/>
        <end position="913"/>
    </location>
</feature>
<feature type="turn" evidence="65">
    <location>
        <begin position="921"/>
        <end position="923"/>
    </location>
</feature>
<feature type="strand" evidence="65">
    <location>
        <begin position="928"/>
        <end position="930"/>
    </location>
</feature>
<feature type="strand" evidence="65">
    <location>
        <begin position="936"/>
        <end position="938"/>
    </location>
</feature>
<feature type="strand" evidence="65">
    <location>
        <begin position="956"/>
        <end position="959"/>
    </location>
</feature>
<feature type="strand" evidence="65">
    <location>
        <begin position="963"/>
        <end position="965"/>
    </location>
</feature>
<feature type="strand" evidence="62">
    <location>
        <begin position="970"/>
        <end position="975"/>
    </location>
</feature>
<feature type="strand" evidence="65">
    <location>
        <begin position="978"/>
        <end position="984"/>
    </location>
</feature>
<feature type="strand" evidence="66">
    <location>
        <begin position="990"/>
        <end position="993"/>
    </location>
</feature>
<feature type="strand" evidence="66">
    <location>
        <begin position="995"/>
        <end position="997"/>
    </location>
</feature>
<feature type="turn" evidence="66">
    <location>
        <begin position="999"/>
        <end position="1001"/>
    </location>
</feature>
<feature type="strand" evidence="66">
    <location>
        <begin position="1004"/>
        <end position="1006"/>
    </location>
</feature>
<feature type="strand" evidence="64">
    <location>
        <begin position="1012"/>
        <end position="1014"/>
    </location>
</feature>
<feature type="strand" evidence="66">
    <location>
        <begin position="1016"/>
        <end position="1022"/>
    </location>
</feature>
<feature type="helix" evidence="55">
    <location>
        <begin position="1087"/>
        <end position="1092"/>
    </location>
</feature>
<feature type="strand" evidence="58">
    <location>
        <begin position="1096"/>
        <end position="1098"/>
    </location>
</feature>
<feature type="strand" evidence="58">
    <location>
        <begin position="1101"/>
        <end position="1103"/>
    </location>
</feature>
<feature type="helix" evidence="58">
    <location>
        <begin position="1105"/>
        <end position="1107"/>
    </location>
</feature>
<feature type="helix" evidence="58">
    <location>
        <begin position="1113"/>
        <end position="1115"/>
    </location>
</feature>
<feature type="strand" evidence="58">
    <location>
        <begin position="1116"/>
        <end position="1124"/>
    </location>
</feature>
<feature type="strand" evidence="58">
    <location>
        <begin position="1126"/>
        <end position="1135"/>
    </location>
</feature>
<feature type="strand" evidence="56">
    <location>
        <begin position="1137"/>
        <end position="1140"/>
    </location>
</feature>
<feature type="strand" evidence="58">
    <location>
        <begin position="1145"/>
        <end position="1152"/>
    </location>
</feature>
<feature type="strand" evidence="60">
    <location>
        <begin position="1154"/>
        <end position="1156"/>
    </location>
</feature>
<feature type="helix" evidence="58">
    <location>
        <begin position="1158"/>
        <end position="1173"/>
    </location>
</feature>
<feature type="strand" evidence="58">
    <location>
        <begin position="1182"/>
        <end position="1186"/>
    </location>
</feature>
<feature type="strand" evidence="58">
    <location>
        <begin position="1188"/>
        <end position="1197"/>
    </location>
</feature>
<feature type="helix" evidence="58">
    <location>
        <begin position="1204"/>
        <end position="1211"/>
    </location>
</feature>
<feature type="strand" evidence="59">
    <location>
        <begin position="1215"/>
        <end position="1217"/>
    </location>
</feature>
<feature type="helix" evidence="58">
    <location>
        <begin position="1223"/>
        <end position="1242"/>
    </location>
</feature>
<feature type="helix" evidence="58">
    <location>
        <begin position="1252"/>
        <end position="1254"/>
    </location>
</feature>
<feature type="strand" evidence="58">
    <location>
        <begin position="1255"/>
        <end position="1258"/>
    </location>
</feature>
<feature type="strand" evidence="57">
    <location>
        <begin position="1260"/>
        <end position="1263"/>
    </location>
</feature>
<feature type="strand" evidence="58">
    <location>
        <begin position="1266"/>
        <end position="1268"/>
    </location>
</feature>
<feature type="helix" evidence="58">
    <location>
        <begin position="1272"/>
        <end position="1280"/>
    </location>
</feature>
<feature type="strand" evidence="61">
    <location>
        <begin position="1284"/>
        <end position="1286"/>
    </location>
</feature>
<feature type="helix" evidence="58">
    <location>
        <begin position="1288"/>
        <end position="1290"/>
    </location>
</feature>
<feature type="helix" evidence="58">
    <location>
        <begin position="1293"/>
        <end position="1295"/>
    </location>
</feature>
<feature type="helix" evidence="58">
    <location>
        <begin position="1298"/>
        <end position="1303"/>
    </location>
</feature>
<feature type="helix" evidence="58">
    <location>
        <begin position="1308"/>
        <end position="1323"/>
    </location>
</feature>
<feature type="helix" evidence="58">
    <location>
        <begin position="1335"/>
        <end position="1343"/>
    </location>
</feature>
<feature type="helix" evidence="58">
    <location>
        <begin position="1356"/>
        <end position="1365"/>
    </location>
</feature>
<feature type="helix" evidence="58">
    <location>
        <begin position="1370"/>
        <end position="1372"/>
    </location>
</feature>
<feature type="helix" evidence="58">
    <location>
        <begin position="1376"/>
        <end position="1388"/>
    </location>
</feature>
<feature type="helix" evidence="58">
    <location>
        <begin position="1390"/>
        <end position="1393"/>
    </location>
</feature>
<feature type="strand" evidence="53">
    <location>
        <begin position="1574"/>
        <end position="1576"/>
    </location>
</feature>
<feature type="strand" evidence="54">
    <location>
        <begin position="1582"/>
        <end position="1584"/>
    </location>
</feature>
<comment type="function">
    <text evidence="1 7 8 9 10 11 13 14 18 19 20 33 34 35 36">Neuronal receptor tyrosine kinase that is essentially and transiently expressed in specific regions of the central and peripheral nervous systems and plays an important role in the genesis and differentiation of the nervous system (PubMed:11121404, PubMed:11387242, PubMed:16317043, PubMed:17274988, PubMed:30061385, PubMed:34646012, PubMed:34819673). Also acts as a key thinness protein involved in the resistance to weight gain: in hypothalamic neurons, controls energy expenditure acting as a negative regulator of white adipose tissue lipolysis and sympathetic tone to fine-tune energy homeostasis (By similarity). Following activation by ALKAL2 ligand at the cell surface, transduces an extracellular signal into an intracellular response (PubMed:30061385, PubMed:33411331, PubMed:34646012, PubMed:34819673). In contrast, ALKAL1 is not a potent physiological ligand for ALK (PubMed:34646012). Ligand-binding to the extracellular domain induces tyrosine kinase activation, leading to activation of the mitogen-activated protein kinase (MAPK) pathway (PubMed:34819673). Phosphorylates almost exclusively at the first tyrosine of the Y-x-x-x-Y-Y motif (PubMed:15226403, PubMed:16878150). Induces tyrosine phosphorylation of CBL, FRS2, IRS1 and SHC1, as well as of the MAP kinases MAPK1/ERK2 and MAPK3/ERK1 (PubMed:15226403, PubMed:16878150). ALK activation may also be regulated by pleiotrophin (PTN) and midkine (MDK) (PubMed:11278720, PubMed:11809760, PubMed:12107166, PubMed:12122009). PTN-binding induces MAPK pathway activation, which is important for the anti-apoptotic signaling of PTN and regulation of cell proliferation (PubMed:11278720, PubMed:11809760, PubMed:12107166). MDK-binding induces phosphorylation of the ALK target insulin receptor substrate (IRS1), activates mitogen-activated protein kinases (MAPKs) and PI3-kinase, resulting also in cell proliferation induction (PubMed:12122009). Drives NF-kappa-B activation, probably through IRS1 and the activation of the AKT serine/threonine kinase (PubMed:15226403, PubMed:16878150). Recruitment of IRS1 to activated ALK and the activation of NF-kappa-B are essential for the autocrine growth and survival signaling of MDK (PubMed:15226403, PubMed:16878150).</text>
</comment>
<comment type="catalytic activity">
    <reaction evidence="5 33 36">
        <text>L-tyrosyl-[protein] + ATP = O-phospho-L-tyrosyl-[protein] + ADP + H(+)</text>
        <dbReference type="Rhea" id="RHEA:10596"/>
        <dbReference type="Rhea" id="RHEA-COMP:10136"/>
        <dbReference type="Rhea" id="RHEA-COMP:20101"/>
        <dbReference type="ChEBI" id="CHEBI:15378"/>
        <dbReference type="ChEBI" id="CHEBI:30616"/>
        <dbReference type="ChEBI" id="CHEBI:46858"/>
        <dbReference type="ChEBI" id="CHEBI:61978"/>
        <dbReference type="ChEBI" id="CHEBI:456216"/>
        <dbReference type="EC" id="2.7.10.1"/>
    </reaction>
</comment>
<comment type="activity regulation">
    <text evidence="18 23 29 32 35 36">Activated upon ALKAL2 ligand-binding (PubMed:34646012, PubMed:34819673). ALKAL2-driven activation is coupled with heparin-binding (PubMed:25605972, PubMed:34646012). Following ligand-binding, homodimerizes and autophosphorylates, activating its kinase activity (PubMed:16317043, PubMed:17681947, PubMed:34646012, PubMed:34819673). Inactivated through dephosphorylation by receptor protein tyrosine phosphatase beta and zeta complex (PTPRB/PTPRZ1) when there is no stimulation by a ligand (PubMed:17681947). Staurosporine, crizotinib and CH5424802 act as inhibitors of ALK kinase activity (PubMed:21575866).</text>
</comment>
<comment type="subunit">
    <text evidence="8 13 14 18 19 20 32 35 36">Homodimer; homodimerizes following heparin- and ligand-binding (PubMed:16317043, PubMed:25605972, PubMed:34646012, PubMed:34819673). Interacts with CBL, IRS1, PIK3R1 and PLCG1 (PubMed:15226403). Interacts with FRS2 and SHC1 (PubMed:15226403, PubMed:16878150, PubMed:17274988). Interacts with PTN and MDK (PubMed:11278720, PubMed:12122009).</text>
</comment>
<comment type="interaction">
    <interactant intactId="EBI-357361">
        <id>Q9UM73</id>
    </interactant>
    <interactant intactId="EBI-357361">
        <id>Q9UM73</id>
        <label>ALK</label>
    </interactant>
    <organismsDiffer>false</organismsDiffer>
    <experiments>10</experiments>
</comment>
<comment type="interaction">
    <interactant intactId="EBI-357361">
        <id>Q9UM73</id>
    </interactant>
    <interactant intactId="EBI-11691642">
        <id>Q6UXT8</id>
        <label>ALKAL1</label>
    </interactant>
    <organismsDiffer>false</organismsDiffer>
    <experiments>7</experiments>
</comment>
<comment type="interaction">
    <interactant intactId="EBI-357361">
        <id>Q9UM73</id>
    </interactant>
    <interactant intactId="EBI-11691780">
        <id>Q6UX46</id>
        <label>ALKAL2</label>
    </interactant>
    <organismsDiffer>false</organismsDiffer>
    <experiments>5</experiments>
</comment>
<comment type="interaction">
    <interactant intactId="EBI-357361">
        <id>Q9UM73</id>
    </interactant>
    <interactant intactId="EBI-352572">
        <id>P08238</id>
        <label>HSP90AB1</label>
    </interactant>
    <organismsDiffer>false</organismsDiffer>
    <experiments>2</experiments>
</comment>
<comment type="interaction">
    <interactant intactId="EBI-357361">
        <id>Q9UM73</id>
    </interactant>
    <interactant intactId="EBI-2263175">
        <id>P23471</id>
        <label>PTPRZ1</label>
    </interactant>
    <organismsDiffer>false</organismsDiffer>
    <experiments>2</experiments>
</comment>
<comment type="interaction">
    <interactant intactId="EBI-357361">
        <id>Q9UM73</id>
    </interactant>
    <interactant intactId="EBI-2480756">
        <id>P07949</id>
        <label>RET</label>
    </interactant>
    <organismsDiffer>false</organismsDiffer>
    <experiments>2</experiments>
</comment>
<comment type="subcellular location">
    <subcellularLocation>
        <location evidence="36 39">Cell membrane</location>
        <topology evidence="18 39">Single-pass type I membrane protein</topology>
    </subcellularLocation>
    <text evidence="18">Membrane attachment is essential for promotion of neuron-like differentiation and cell proliferation arrest through specific activation of the MAP kinase pathway.</text>
</comment>
<comment type="tissue specificity">
    <text evidence="39">Expressed in brain and CNS. Also expressed in the small intestine and testis, but not in normal lymphoid cells.</text>
</comment>
<comment type="domain">
    <text evidence="35 36">The EGF-like region drives the cytokine specificity for ALKAL2.</text>
</comment>
<comment type="domain">
    <text evidence="32 35">The heparin-binding region binds heparin glycosaminoglycan (PubMed:25605972, PubMed:34646012). Heparin-binding is required for ALKAL2-driven activation (PubMed:34646012).</text>
</comment>
<comment type="PTM">
    <text evidence="7 16 19 20 23 36">Phosphorylated at tyrosine residues by autocatalysis, which activates kinase activity (PubMed:11121404, PubMed:15938644, PubMed:16878150, PubMed:34819673). In cells not stimulated by a ligand, receptor protein tyrosine phosphatase beta and zeta complex (PTPRB/PTPRZ1) dephosphorylates ALK at the sites in ALK that are undergoing autophosphorylation through autoactivation (PubMed:17681947). Phosphorylation at Tyr-1507 is critical for SHC1 association (PubMed:17274988).</text>
</comment>
<comment type="PTM">
    <text evidence="39">N-glycosylated.</text>
</comment>
<comment type="disease">
    <text evidence="16">A chromosomal aberration involving ALK is found in a form of non-Hodgkin lymphoma. Translocation t(2;5)(p23;q35) with NPM1. The resulting chimeric NPM1-ALK protein homodimerize and the kinase becomes constitutively activated. The constitutively active fusion proteins are responsible for 5-10% of non-Hodgkin lymphomas.</text>
</comment>
<comment type="disease">
    <text evidence="12 17">A chromosomal aberration involving ALK is associated with inflammatory myofibroblastic tumors (IMTs). Translocation t(2;11)(p23;p15) with CARS; translocation t(2;4)(p23;q21) with SEC31A.</text>
</comment>
<comment type="disease">
    <text evidence="12">A chromosomal aberration involving ALK is associated with anaplastic large-cell lymphoma (ALCL). Translocation t(2;17)(p23;q25) with ALO17.</text>
</comment>
<comment type="disease" evidence="24 25 26 28 31">
    <disease id="DI-02632">
        <name>Neuroblastoma 3</name>
        <acronym>NBLST3</acronym>
        <description>A common neoplasm of early childhood arising from embryonic cells that form the primitive neural crest and give rise to the adrenal medulla and the sympathetic nervous system.</description>
        <dbReference type="MIM" id="613014"/>
    </disease>
    <text>Disease susceptibility is associated with variants affecting the gene represented in this entry.</text>
</comment>
<comment type="disease">
    <text evidence="15">The ALK signaling pathway plays an important role in glioblastoma, the most common malignant brain tumor of adults and one of the most lethal cancers. It regulates both glioblastoma migration and growth.</text>
</comment>
<comment type="disease">
    <text evidence="30">A chromosomal aberration involving ALK is found in one subject with colorectal cancer. Translocation t(2;2)(p23.1;p23.3). A 5 million base pair tandem duplication generates an in-frame WDCP-ALK gene fusion.</text>
</comment>
<comment type="disease">
    <text evidence="22">A chromosomal aberration involving ALK has been identified in a subset of patients with non-small-cell lung carcinoma. This aberration leads to the production of a fusion protein between the N-terminus of EML4 et the C-terminus of ALK. It is unclear whether the fusion protein is caused by a simple inversion within 2p (inv(2)(p21p23)) or whether the chromosome translocation involving 2p is more complex. When tested in a heterologous system, the fusion protein EML4-ALK possesses transforming activity that is dependent on ALK catalytic activity, possibly due to spontaneous dimerization mediated by the EML4 moiety, leading to ALK kinase activation.</text>
</comment>
<comment type="similarity">
    <text evidence="4">Belongs to the protein kinase superfamily. Tyr protein kinase family. Insulin receptor subfamily.</text>
</comment>
<comment type="sequence caution" evidence="42">
    <conflict type="erroneous initiation">
        <sequence resource="EMBL-CDS" id="BAD92714"/>
    </conflict>
    <text>Extended N-terminus.</text>
</comment>
<comment type="online information" name="Atlas of Genetics and Cytogenetics in Oncology and Haematology">
    <link uri="https://atlasgeneticsoncology.org/gene/16/ALK"/>
</comment>
<evidence type="ECO:0000250" key="1">
    <source>
        <dbReference type="UniProtKB" id="P97793"/>
    </source>
</evidence>
<evidence type="ECO:0000255" key="2"/>
<evidence type="ECO:0000255" key="3">
    <source>
        <dbReference type="PROSITE-ProRule" id="PRU00128"/>
    </source>
</evidence>
<evidence type="ECO:0000255" key="4">
    <source>
        <dbReference type="PROSITE-ProRule" id="PRU00159"/>
    </source>
</evidence>
<evidence type="ECO:0000255" key="5">
    <source>
        <dbReference type="PROSITE-ProRule" id="PRU10028"/>
    </source>
</evidence>
<evidence type="ECO:0000256" key="6">
    <source>
        <dbReference type="SAM" id="MobiDB-lite"/>
    </source>
</evidence>
<evidence type="ECO:0000269" key="7">
    <source>
    </source>
</evidence>
<evidence type="ECO:0000269" key="8">
    <source>
    </source>
</evidence>
<evidence type="ECO:0000269" key="9">
    <source>
    </source>
</evidence>
<evidence type="ECO:0000269" key="10">
    <source>
    </source>
</evidence>
<evidence type="ECO:0000269" key="11">
    <source>
    </source>
</evidence>
<evidence type="ECO:0000269" key="12">
    <source>
    </source>
</evidence>
<evidence type="ECO:0000269" key="13">
    <source>
    </source>
</evidence>
<evidence type="ECO:0000269" key="14">
    <source>
    </source>
</evidence>
<evidence type="ECO:0000269" key="15">
    <source>
    </source>
</evidence>
<evidence type="ECO:0000269" key="16">
    <source>
    </source>
</evidence>
<evidence type="ECO:0000269" key="17">
    <source>
    </source>
</evidence>
<evidence type="ECO:0000269" key="18">
    <source>
    </source>
</evidence>
<evidence type="ECO:0000269" key="19">
    <source>
    </source>
</evidence>
<evidence type="ECO:0000269" key="20">
    <source>
    </source>
</evidence>
<evidence type="ECO:0000269" key="21">
    <source>
    </source>
</evidence>
<evidence type="ECO:0000269" key="22">
    <source>
    </source>
</evidence>
<evidence type="ECO:0000269" key="23">
    <source>
    </source>
</evidence>
<evidence type="ECO:0000269" key="24">
    <source>
    </source>
</evidence>
<evidence type="ECO:0000269" key="25">
    <source>
    </source>
</evidence>
<evidence type="ECO:0000269" key="26">
    <source>
    </source>
</evidence>
<evidence type="ECO:0000269" key="27">
    <source>
    </source>
</evidence>
<evidence type="ECO:0000269" key="28">
    <source>
    </source>
</evidence>
<evidence type="ECO:0000269" key="29">
    <source>
    </source>
</evidence>
<evidence type="ECO:0000269" key="30">
    <source>
    </source>
</evidence>
<evidence type="ECO:0000269" key="31">
    <source>
    </source>
</evidence>
<evidence type="ECO:0000269" key="32">
    <source>
    </source>
</evidence>
<evidence type="ECO:0000269" key="33">
    <source>
    </source>
</evidence>
<evidence type="ECO:0000269" key="34">
    <source>
    </source>
</evidence>
<evidence type="ECO:0000269" key="35">
    <source>
    </source>
</evidence>
<evidence type="ECO:0000269" key="36">
    <source>
    </source>
</evidence>
<evidence type="ECO:0000269" key="37">
    <source>
    </source>
</evidence>
<evidence type="ECO:0000269" key="38">
    <source>
    </source>
</evidence>
<evidence type="ECO:0000269" key="39">
    <source>
    </source>
</evidence>
<evidence type="ECO:0000269" key="40">
    <source ref="4"/>
</evidence>
<evidence type="ECO:0000303" key="41">
    <source>
    </source>
</evidence>
<evidence type="ECO:0000305" key="42"/>
<evidence type="ECO:0000312" key="43">
    <source>
        <dbReference type="HGNC" id="HGNC:427"/>
    </source>
</evidence>
<evidence type="ECO:0007744" key="44">
    <source>
        <dbReference type="PDB" id="2XB7"/>
    </source>
</evidence>
<evidence type="ECO:0007744" key="45">
    <source>
        <dbReference type="PDB" id="2XBA"/>
    </source>
</evidence>
<evidence type="ECO:0007744" key="46">
    <source>
        <dbReference type="PDB" id="3AOX"/>
    </source>
</evidence>
<evidence type="ECO:0007744" key="47">
    <source>
        <dbReference type="PDB" id="4FNW"/>
    </source>
</evidence>
<evidence type="ECO:0007744" key="48">
    <source>
        <dbReference type="PDB" id="4FNX"/>
    </source>
</evidence>
<evidence type="ECO:0007744" key="49">
    <source>
        <dbReference type="PDB" id="4FNY"/>
    </source>
</evidence>
<evidence type="ECO:0007744" key="50">
    <source>
        <dbReference type="PDB" id="4FNZ"/>
    </source>
</evidence>
<evidence type="ECO:0007744" key="51">
    <source>
        <dbReference type="PDB" id="7MZW"/>
    </source>
</evidence>
<evidence type="ECO:0007744" key="52">
    <source>
    </source>
</evidence>
<evidence type="ECO:0007829" key="53">
    <source>
        <dbReference type="PDB" id="2KUP"/>
    </source>
</evidence>
<evidence type="ECO:0007829" key="54">
    <source>
        <dbReference type="PDB" id="2YT2"/>
    </source>
</evidence>
<evidence type="ECO:0007829" key="55">
    <source>
        <dbReference type="PDB" id="3AOX"/>
    </source>
</evidence>
<evidence type="ECO:0007829" key="56">
    <source>
        <dbReference type="PDB" id="3LCS"/>
    </source>
</evidence>
<evidence type="ECO:0007829" key="57">
    <source>
        <dbReference type="PDB" id="4DCE"/>
    </source>
</evidence>
<evidence type="ECO:0007829" key="58">
    <source>
        <dbReference type="PDB" id="4Z55"/>
    </source>
</evidence>
<evidence type="ECO:0007829" key="59">
    <source>
        <dbReference type="PDB" id="5A9U"/>
    </source>
</evidence>
<evidence type="ECO:0007829" key="60">
    <source>
        <dbReference type="PDB" id="5IUI"/>
    </source>
</evidence>
<evidence type="ECO:0007829" key="61">
    <source>
        <dbReference type="PDB" id="7BTT"/>
    </source>
</evidence>
<evidence type="ECO:0007829" key="62">
    <source>
        <dbReference type="PDB" id="7LRZ"/>
    </source>
</evidence>
<evidence type="ECO:0007829" key="63">
    <source>
        <dbReference type="PDB" id="7LS0"/>
    </source>
</evidence>
<evidence type="ECO:0007829" key="64">
    <source>
        <dbReference type="PDB" id="7MZW"/>
    </source>
</evidence>
<evidence type="ECO:0007829" key="65">
    <source>
        <dbReference type="PDB" id="7MZY"/>
    </source>
</evidence>
<evidence type="ECO:0007829" key="66">
    <source>
        <dbReference type="PDB" id="7N00"/>
    </source>
</evidence>
<name>ALK_HUMAN</name>
<protein>
    <recommendedName>
        <fullName evidence="42">ALK tyrosine kinase receptor</fullName>
        <ecNumber evidence="33 36">2.7.10.1</ecNumber>
    </recommendedName>
    <alternativeName>
        <fullName evidence="41">Anaplastic lymphoma kinase</fullName>
    </alternativeName>
    <cdAntigenName>CD246</cdAntigenName>
</protein>